<gene>
    <name evidence="21" type="primary">LGALS3</name>
    <name type="synonym">MAC2</name>
</gene>
<keyword id="KW-0002">3D-structure</keyword>
<keyword id="KW-0007">Acetylation</keyword>
<keyword id="KW-0963">Cytoplasm</keyword>
<keyword id="KW-0221">Differentiation</keyword>
<keyword id="KW-1015">Disulfide bond</keyword>
<keyword id="KW-0389">IgE-binding protein</keyword>
<keyword id="KW-0391">Immunity</keyword>
<keyword id="KW-0399">Innate immunity</keyword>
<keyword id="KW-0430">Lectin</keyword>
<keyword id="KW-0507">mRNA processing</keyword>
<keyword id="KW-0508">mRNA splicing</keyword>
<keyword id="KW-0539">Nucleus</keyword>
<keyword id="KW-0597">Phosphoprotein</keyword>
<keyword id="KW-1267">Proteomics identification</keyword>
<keyword id="KW-1185">Reference proteome</keyword>
<keyword id="KW-0677">Repeat</keyword>
<keyword id="KW-0964">Secreted</keyword>
<keyword id="KW-0747">Spliceosome</keyword>
<evidence type="ECO:0000250" key="1"/>
<evidence type="ECO:0000250" key="2">
    <source>
        <dbReference type="UniProtKB" id="P08699"/>
    </source>
</evidence>
<evidence type="ECO:0000250" key="3">
    <source>
        <dbReference type="UniProtKB" id="P16110"/>
    </source>
</evidence>
<evidence type="ECO:0000250" key="4">
    <source>
        <dbReference type="UniProtKB" id="P38486"/>
    </source>
</evidence>
<evidence type="ECO:0000255" key="5">
    <source>
        <dbReference type="PROSITE-ProRule" id="PRU00639"/>
    </source>
</evidence>
<evidence type="ECO:0000256" key="6">
    <source>
        <dbReference type="SAM" id="MobiDB-lite"/>
    </source>
</evidence>
<evidence type="ECO:0000269" key="7">
    <source>
    </source>
</evidence>
<evidence type="ECO:0000269" key="8">
    <source>
    </source>
</evidence>
<evidence type="ECO:0000269" key="9">
    <source>
    </source>
</evidence>
<evidence type="ECO:0000269" key="10">
    <source>
    </source>
</evidence>
<evidence type="ECO:0000269" key="11">
    <source>
    </source>
</evidence>
<evidence type="ECO:0000269" key="12">
    <source>
    </source>
</evidence>
<evidence type="ECO:0000269" key="13">
    <source>
    </source>
</evidence>
<evidence type="ECO:0000269" key="14">
    <source>
    </source>
</evidence>
<evidence type="ECO:0000269" key="15">
    <source>
    </source>
</evidence>
<evidence type="ECO:0000269" key="16">
    <source>
    </source>
</evidence>
<evidence type="ECO:0000269" key="17">
    <source>
    </source>
</evidence>
<evidence type="ECO:0000269" key="18">
    <source>
    </source>
</evidence>
<evidence type="ECO:0000269" key="19">
    <source>
    </source>
</evidence>
<evidence type="ECO:0000305" key="20"/>
<evidence type="ECO:0000312" key="21">
    <source>
        <dbReference type="HGNC" id="HGNC:6563"/>
    </source>
</evidence>
<evidence type="ECO:0007744" key="22">
    <source>
    </source>
</evidence>
<evidence type="ECO:0007829" key="23">
    <source>
        <dbReference type="PDB" id="3ZSJ"/>
    </source>
</evidence>
<evidence type="ECO:0007829" key="24">
    <source>
        <dbReference type="PDB" id="6FOF"/>
    </source>
</evidence>
<evidence type="ECO:0007829" key="25">
    <source>
        <dbReference type="PDB" id="6ZVF"/>
    </source>
</evidence>
<sequence length="250" mass="26152">MADNFSLHDALSGSGNPNPQGWPGAWGNQPAGAGGYPGASYPGAYPGQAPPGAYPGQAPPGAYPGAPGAYPGAPAPGVYPGPPSGPGAYPSSGQPSATGAYPATGPYGAPAGPLIVPYNLPLPGGVVPRMLITILGTVKPNANRIALDFQRGNDVAFHFNPRFNENNRRVIVCNTKLDNNWGREERQSVFPFESGKPFKIQVLVEPDHFKVAVNDAHLLQYNHRVKKLNEISKLGISGDIDLTSASYTMI</sequence>
<dbReference type="EMBL" id="M57710">
    <property type="protein sequence ID" value="AAA35607.1"/>
    <property type="molecule type" value="mRNA"/>
</dbReference>
<dbReference type="EMBL" id="M35368">
    <property type="protein sequence ID" value="AAA88086.1"/>
    <property type="molecule type" value="mRNA"/>
</dbReference>
<dbReference type="EMBL" id="M36682">
    <property type="protein sequence ID" value="AAA36163.1"/>
    <property type="molecule type" value="mRNA"/>
</dbReference>
<dbReference type="EMBL" id="M64303">
    <property type="status" value="NOT_ANNOTATED_CDS"/>
    <property type="molecule type" value="mRNA"/>
</dbReference>
<dbReference type="EMBL" id="S59012">
    <property type="protein sequence ID" value="AAB26229.1"/>
    <property type="molecule type" value="mRNA"/>
</dbReference>
<dbReference type="EMBL" id="AF031425">
    <property type="protein sequence ID" value="AAB86584.1"/>
    <property type="molecule type" value="Genomic_DNA"/>
</dbReference>
<dbReference type="EMBL" id="AF031422">
    <property type="protein sequence ID" value="AAB86584.1"/>
    <property type="status" value="JOINED"/>
    <property type="molecule type" value="Genomic_DNA"/>
</dbReference>
<dbReference type="EMBL" id="AF031423">
    <property type="protein sequence ID" value="AAB86584.1"/>
    <property type="status" value="JOINED"/>
    <property type="molecule type" value="Genomic_DNA"/>
</dbReference>
<dbReference type="EMBL" id="AF031424">
    <property type="protein sequence ID" value="AAB86584.1"/>
    <property type="status" value="JOINED"/>
    <property type="molecule type" value="Genomic_DNA"/>
</dbReference>
<dbReference type="EMBL" id="AB006780">
    <property type="protein sequence ID" value="BAA22164.1"/>
    <property type="molecule type" value="mRNA"/>
</dbReference>
<dbReference type="EMBL" id="AK314929">
    <property type="protein sequence ID" value="BAG37435.1"/>
    <property type="molecule type" value="mRNA"/>
</dbReference>
<dbReference type="EMBL" id="CR456897">
    <property type="protein sequence ID" value="CAG33178.1"/>
    <property type="molecule type" value="mRNA"/>
</dbReference>
<dbReference type="EMBL" id="AL139316">
    <property type="status" value="NOT_ANNOTATED_CDS"/>
    <property type="molecule type" value="Genomic_DNA"/>
</dbReference>
<dbReference type="EMBL" id="CH471061">
    <property type="protein sequence ID" value="EAW80658.1"/>
    <property type="molecule type" value="Genomic_DNA"/>
</dbReference>
<dbReference type="EMBL" id="BC001120">
    <property type="protein sequence ID" value="AAH01120.1"/>
    <property type="molecule type" value="mRNA"/>
</dbReference>
<dbReference type="EMBL" id="BC053667">
    <property type="protein sequence ID" value="AAH53667.1"/>
    <property type="molecule type" value="mRNA"/>
</dbReference>
<dbReference type="CCDS" id="CCDS41956.1"/>
<dbReference type="PIR" id="A35820">
    <property type="entry name" value="A35820"/>
</dbReference>
<dbReference type="RefSeq" id="NP_002297.2">
    <property type="nucleotide sequence ID" value="NM_002306.4"/>
</dbReference>
<dbReference type="PDB" id="1A3K">
    <property type="method" value="X-ray"/>
    <property type="resolution" value="2.10 A"/>
    <property type="chains" value="A=114-250"/>
</dbReference>
<dbReference type="PDB" id="1KJL">
    <property type="method" value="X-ray"/>
    <property type="resolution" value="1.40 A"/>
    <property type="chains" value="A=105-250"/>
</dbReference>
<dbReference type="PDB" id="1KJR">
    <property type="method" value="X-ray"/>
    <property type="resolution" value="1.55 A"/>
    <property type="chains" value="A=105-250"/>
</dbReference>
<dbReference type="PDB" id="2NMN">
    <property type="method" value="X-ray"/>
    <property type="resolution" value="2.45 A"/>
    <property type="chains" value="A=113-250"/>
</dbReference>
<dbReference type="PDB" id="2NMO">
    <property type="method" value="X-ray"/>
    <property type="resolution" value="1.35 A"/>
    <property type="chains" value="A=113-250"/>
</dbReference>
<dbReference type="PDB" id="2NN8">
    <property type="method" value="X-ray"/>
    <property type="resolution" value="1.35 A"/>
    <property type="chains" value="A=113-250"/>
</dbReference>
<dbReference type="PDB" id="2XG3">
    <property type="method" value="X-ray"/>
    <property type="resolution" value="1.20 A"/>
    <property type="chains" value="A=114-250"/>
</dbReference>
<dbReference type="PDB" id="3AYA">
    <property type="method" value="X-ray"/>
    <property type="resolution" value="2.00 A"/>
    <property type="chains" value="A/B=117-250"/>
</dbReference>
<dbReference type="PDB" id="3AYC">
    <property type="method" value="X-ray"/>
    <property type="resolution" value="1.80 A"/>
    <property type="chains" value="A/B=117-250"/>
</dbReference>
<dbReference type="PDB" id="3AYD">
    <property type="method" value="X-ray"/>
    <property type="resolution" value="1.90 A"/>
    <property type="chains" value="A=117-250"/>
</dbReference>
<dbReference type="PDB" id="3AYE">
    <property type="method" value="X-ray"/>
    <property type="resolution" value="2.00 A"/>
    <property type="chains" value="A/B=117-250"/>
</dbReference>
<dbReference type="PDB" id="3T1L">
    <property type="method" value="X-ray"/>
    <property type="resolution" value="1.60 A"/>
    <property type="chains" value="A=108-250"/>
</dbReference>
<dbReference type="PDB" id="3T1M">
    <property type="method" value="X-ray"/>
    <property type="resolution" value="1.55 A"/>
    <property type="chains" value="A=108-250"/>
</dbReference>
<dbReference type="PDB" id="3ZSJ">
    <property type="method" value="X-ray"/>
    <property type="resolution" value="0.86 A"/>
    <property type="chains" value="A=113-250"/>
</dbReference>
<dbReference type="PDB" id="3ZSK">
    <property type="method" value="X-ray"/>
    <property type="resolution" value="0.90 A"/>
    <property type="chains" value="A=114-250"/>
</dbReference>
<dbReference type="PDB" id="3ZSL">
    <property type="method" value="X-ray"/>
    <property type="resolution" value="1.08 A"/>
    <property type="chains" value="A=114-250"/>
</dbReference>
<dbReference type="PDB" id="3ZSM">
    <property type="method" value="X-ray"/>
    <property type="resolution" value="1.25 A"/>
    <property type="chains" value="A=114-250"/>
</dbReference>
<dbReference type="PDB" id="4BLI">
    <property type="method" value="X-ray"/>
    <property type="resolution" value="1.08 A"/>
    <property type="chains" value="A=114-250"/>
</dbReference>
<dbReference type="PDB" id="4BLJ">
    <property type="method" value="X-ray"/>
    <property type="resolution" value="1.20 A"/>
    <property type="chains" value="A=114-250"/>
</dbReference>
<dbReference type="PDB" id="4BM8">
    <property type="method" value="X-ray"/>
    <property type="resolution" value="0.96 A"/>
    <property type="chains" value="A=114-250"/>
</dbReference>
<dbReference type="PDB" id="4JC1">
    <property type="method" value="X-ray"/>
    <property type="resolution" value="1.50 A"/>
    <property type="chains" value="A=108-250"/>
</dbReference>
<dbReference type="PDB" id="4JCK">
    <property type="method" value="X-ray"/>
    <property type="resolution" value="1.15 A"/>
    <property type="chains" value="A=108-250"/>
</dbReference>
<dbReference type="PDB" id="4LBJ">
    <property type="method" value="X-ray"/>
    <property type="resolution" value="1.80 A"/>
    <property type="chains" value="A=114-250"/>
</dbReference>
<dbReference type="PDB" id="4LBK">
    <property type="method" value="X-ray"/>
    <property type="resolution" value="1.60 A"/>
    <property type="chains" value="A=114-250"/>
</dbReference>
<dbReference type="PDB" id="4LBL">
    <property type="method" value="X-ray"/>
    <property type="resolution" value="1.58 A"/>
    <property type="chains" value="A=114-250"/>
</dbReference>
<dbReference type="PDB" id="4LBM">
    <property type="method" value="X-ray"/>
    <property type="resolution" value="1.55 A"/>
    <property type="chains" value="A=112-250"/>
</dbReference>
<dbReference type="PDB" id="4LBN">
    <property type="method" value="X-ray"/>
    <property type="resolution" value="1.70 A"/>
    <property type="chains" value="A=112-250"/>
</dbReference>
<dbReference type="PDB" id="4LBO">
    <property type="method" value="X-ray"/>
    <property type="resolution" value="1.65 A"/>
    <property type="chains" value="A=113-250"/>
</dbReference>
<dbReference type="PDB" id="4R9A">
    <property type="method" value="X-ray"/>
    <property type="resolution" value="1.20 A"/>
    <property type="chains" value="A=111-250"/>
</dbReference>
<dbReference type="PDB" id="4R9B">
    <property type="method" value="X-ray"/>
    <property type="resolution" value="1.20 A"/>
    <property type="chains" value="A=111-250"/>
</dbReference>
<dbReference type="PDB" id="4R9C">
    <property type="method" value="X-ray"/>
    <property type="resolution" value="1.19 A"/>
    <property type="chains" value="A=111-250"/>
</dbReference>
<dbReference type="PDB" id="4R9D">
    <property type="method" value="X-ray"/>
    <property type="resolution" value="1.24 A"/>
    <property type="chains" value="A=111-250"/>
</dbReference>
<dbReference type="PDB" id="4RL7">
    <property type="method" value="X-ray"/>
    <property type="resolution" value="2.00 A"/>
    <property type="chains" value="A=111-250"/>
</dbReference>
<dbReference type="PDB" id="4XBN">
    <property type="method" value="X-ray"/>
    <property type="resolution" value="2.21 A"/>
    <property type="chains" value="A=113-250"/>
</dbReference>
<dbReference type="PDB" id="5E88">
    <property type="method" value="X-ray"/>
    <property type="resolution" value="1.60 A"/>
    <property type="chains" value="A=114-250"/>
</dbReference>
<dbReference type="PDB" id="5E89">
    <property type="method" value="X-ray"/>
    <property type="resolution" value="1.50 A"/>
    <property type="chains" value="A=114-250"/>
</dbReference>
<dbReference type="PDB" id="5E8A">
    <property type="method" value="X-ray"/>
    <property type="resolution" value="1.50 A"/>
    <property type="chains" value="A=114-250"/>
</dbReference>
<dbReference type="PDB" id="5EXO">
    <property type="method" value="X-ray"/>
    <property type="resolution" value="1.50 A"/>
    <property type="chains" value="A=112-250"/>
</dbReference>
<dbReference type="PDB" id="5H9P">
    <property type="method" value="X-ray"/>
    <property type="resolution" value="2.04 A"/>
    <property type="chains" value="A=113-250"/>
</dbReference>
<dbReference type="PDB" id="5H9R">
    <property type="method" value="X-ray"/>
    <property type="resolution" value="1.58 A"/>
    <property type="chains" value="A=113-250"/>
</dbReference>
<dbReference type="PDB" id="5IUQ">
    <property type="method" value="X-ray"/>
    <property type="resolution" value="1.12 A"/>
    <property type="chains" value="A=113-250"/>
</dbReference>
<dbReference type="PDB" id="5NF7">
    <property type="method" value="X-ray"/>
    <property type="resolution" value="1.59 A"/>
    <property type="chains" value="A=106-250"/>
</dbReference>
<dbReference type="PDB" id="5NF9">
    <property type="method" value="X-ray"/>
    <property type="resolution" value="1.87 A"/>
    <property type="chains" value="A=106-250"/>
</dbReference>
<dbReference type="PDB" id="5NFA">
    <property type="method" value="X-ray"/>
    <property type="resolution" value="1.59 A"/>
    <property type="chains" value="A=106-250"/>
</dbReference>
<dbReference type="PDB" id="5NFB">
    <property type="method" value="X-ray"/>
    <property type="resolution" value="1.59 A"/>
    <property type="chains" value="A=106-250"/>
</dbReference>
<dbReference type="PDB" id="5NFC">
    <property type="method" value="X-ray"/>
    <property type="resolution" value="1.59 A"/>
    <property type="chains" value="A=106-250"/>
</dbReference>
<dbReference type="PDB" id="5OAX">
    <property type="method" value="X-ray"/>
    <property type="resolution" value="1.20 A"/>
    <property type="chains" value="A=114-250"/>
</dbReference>
<dbReference type="PDB" id="5ODY">
    <property type="method" value="X-ray"/>
    <property type="resolution" value="1.15 A"/>
    <property type="chains" value="A=113-250"/>
</dbReference>
<dbReference type="PDB" id="6B8K">
    <property type="method" value="X-ray"/>
    <property type="resolution" value="1.28 A"/>
    <property type="chains" value="A=112-250"/>
</dbReference>
<dbReference type="PDB" id="6EOG">
    <property type="method" value="X-ray"/>
    <property type="resolution" value="1.20 A"/>
    <property type="chains" value="A=114-250"/>
</dbReference>
<dbReference type="PDB" id="6EOL">
    <property type="method" value="X-ray"/>
    <property type="resolution" value="1.50 A"/>
    <property type="chains" value="A=114-250"/>
</dbReference>
<dbReference type="PDB" id="6EXY">
    <property type="method" value="Other"/>
    <property type="resolution" value="1.10 A"/>
    <property type="chains" value="A=113-250"/>
</dbReference>
<dbReference type="PDB" id="6EYM">
    <property type="method" value="Other"/>
    <property type="resolution" value="1.70 A"/>
    <property type="chains" value="A=113-250"/>
</dbReference>
<dbReference type="PDB" id="6F2Q">
    <property type="method" value="Other"/>
    <property type="resolution" value="1.03 A"/>
    <property type="chains" value="A=113-250"/>
</dbReference>
<dbReference type="PDB" id="6F6Y">
    <property type="method" value="X-ray"/>
    <property type="resolution" value="1.41 A"/>
    <property type="chains" value="A=114-250"/>
</dbReference>
<dbReference type="PDB" id="6FK2">
    <property type="method" value="X-ray"/>
    <property type="resolution" value="1.01 A"/>
    <property type="chains" value="A=113-250"/>
</dbReference>
<dbReference type="PDB" id="6FOF">
    <property type="method" value="X-ray"/>
    <property type="resolution" value="2.20 A"/>
    <property type="chains" value="A/B/C/D/E/F/G/H/I/J/K/L=2-250"/>
</dbReference>
<dbReference type="PDB" id="6G0V">
    <property type="method" value="X-ray"/>
    <property type="resolution" value="1.09 A"/>
    <property type="chains" value="A=114-250"/>
</dbReference>
<dbReference type="PDB" id="6H64">
    <property type="method" value="X-ray"/>
    <property type="resolution" value="1.80 A"/>
    <property type="chains" value="A/B/C/D/E/F=96-250"/>
</dbReference>
<dbReference type="PDB" id="6I74">
    <property type="method" value="X-ray"/>
    <property type="resolution" value="0.96 A"/>
    <property type="chains" value="A=113-250"/>
</dbReference>
<dbReference type="PDB" id="6I75">
    <property type="method" value="X-ray"/>
    <property type="resolution" value="1.17 A"/>
    <property type="chains" value="A=113-250"/>
</dbReference>
<dbReference type="PDB" id="6I76">
    <property type="method" value="X-ray"/>
    <property type="resolution" value="1.20 A"/>
    <property type="chains" value="A=113-250"/>
</dbReference>
<dbReference type="PDB" id="6I77">
    <property type="method" value="X-ray"/>
    <property type="resolution" value="1.22 A"/>
    <property type="chains" value="A=113-250"/>
</dbReference>
<dbReference type="PDB" id="6I78">
    <property type="method" value="X-ray"/>
    <property type="resolution" value="1.15 A"/>
    <property type="chains" value="A=113-250"/>
</dbReference>
<dbReference type="PDB" id="6KXA">
    <property type="method" value="X-ray"/>
    <property type="resolution" value="1.23 A"/>
    <property type="chains" value="A=113-250"/>
</dbReference>
<dbReference type="PDB" id="6KXB">
    <property type="method" value="X-ray"/>
    <property type="resolution" value="1.50 A"/>
    <property type="chains" value="A=113-250"/>
</dbReference>
<dbReference type="PDB" id="6Q0Q">
    <property type="method" value="X-ray"/>
    <property type="resolution" value="1.99 A"/>
    <property type="chains" value="A=112-250"/>
</dbReference>
<dbReference type="PDB" id="6Q17">
    <property type="method" value="X-ray"/>
    <property type="resolution" value="1.98 A"/>
    <property type="chains" value="A=112-250"/>
</dbReference>
<dbReference type="PDB" id="6QGE">
    <property type="method" value="X-ray"/>
    <property type="resolution" value="1.16 A"/>
    <property type="chains" value="A=113-250"/>
</dbReference>
<dbReference type="PDB" id="6QGF">
    <property type="method" value="X-ray"/>
    <property type="resolution" value="1.34 A"/>
    <property type="chains" value="A=113-250"/>
</dbReference>
<dbReference type="PDB" id="6QLN">
    <property type="method" value="X-ray"/>
    <property type="resolution" value="1.00 A"/>
    <property type="chains" value="A=113-250"/>
</dbReference>
<dbReference type="PDB" id="6QLO">
    <property type="method" value="X-ray"/>
    <property type="resolution" value="1.18 A"/>
    <property type="chains" value="A=113-250"/>
</dbReference>
<dbReference type="PDB" id="6QLP">
    <property type="method" value="X-ray"/>
    <property type="resolution" value="1.08 A"/>
    <property type="chains" value="A=113-250"/>
</dbReference>
<dbReference type="PDB" id="6QLQ">
    <property type="method" value="X-ray"/>
    <property type="resolution" value="1.08 A"/>
    <property type="chains" value="B=113-250"/>
</dbReference>
<dbReference type="PDB" id="6QLR">
    <property type="method" value="X-ray"/>
    <property type="resolution" value="0.97 A"/>
    <property type="chains" value="A=113-250"/>
</dbReference>
<dbReference type="PDB" id="6QLS">
    <property type="method" value="X-ray"/>
    <property type="resolution" value="1.05 A"/>
    <property type="chains" value="A=113-250"/>
</dbReference>
<dbReference type="PDB" id="6QLT">
    <property type="method" value="X-ray"/>
    <property type="resolution" value="1.15 A"/>
    <property type="chains" value="A=113-250"/>
</dbReference>
<dbReference type="PDB" id="6QLU">
    <property type="method" value="X-ray"/>
    <property type="resolution" value="1.10 A"/>
    <property type="chains" value="A=113-250"/>
</dbReference>
<dbReference type="PDB" id="6RHL">
    <property type="method" value="X-ray"/>
    <property type="resolution" value="1.30 A"/>
    <property type="chains" value="A=113-250"/>
</dbReference>
<dbReference type="PDB" id="6RHM">
    <property type="method" value="X-ray"/>
    <property type="resolution" value="1.60 A"/>
    <property type="chains" value="A=113-250"/>
</dbReference>
<dbReference type="PDB" id="6RZF">
    <property type="method" value="X-ray"/>
    <property type="resolution" value="1.02 A"/>
    <property type="chains" value="A=113-250"/>
</dbReference>
<dbReference type="PDB" id="6RZG">
    <property type="method" value="X-ray"/>
    <property type="resolution" value="1.01 A"/>
    <property type="chains" value="A=113-250"/>
</dbReference>
<dbReference type="PDB" id="6RZH">
    <property type="method" value="X-ray"/>
    <property type="resolution" value="0.95 A"/>
    <property type="chains" value="A=113-250"/>
</dbReference>
<dbReference type="PDB" id="6RZI">
    <property type="method" value="X-ray"/>
    <property type="resolution" value="1.09 A"/>
    <property type="chains" value="A=113-250"/>
</dbReference>
<dbReference type="PDB" id="6RZJ">
    <property type="method" value="X-ray"/>
    <property type="resolution" value="1.10 A"/>
    <property type="chains" value="A=113-250"/>
</dbReference>
<dbReference type="PDB" id="6RZK">
    <property type="method" value="X-ray"/>
    <property type="resolution" value="1.05 A"/>
    <property type="chains" value="A=113-250"/>
</dbReference>
<dbReference type="PDB" id="6RZL">
    <property type="method" value="X-ray"/>
    <property type="resolution" value="1.04 A"/>
    <property type="chains" value="A=113-250"/>
</dbReference>
<dbReference type="PDB" id="6RZM">
    <property type="method" value="X-ray"/>
    <property type="resolution" value="1.34 A"/>
    <property type="chains" value="A=113-250"/>
</dbReference>
<dbReference type="PDB" id="6TF6">
    <property type="method" value="X-ray"/>
    <property type="resolution" value="1.50 A"/>
    <property type="chains" value="A=114-250"/>
</dbReference>
<dbReference type="PDB" id="6TF7">
    <property type="method" value="X-ray"/>
    <property type="resolution" value="1.40 A"/>
    <property type="chains" value="A=114-250"/>
</dbReference>
<dbReference type="PDB" id="6Y4C">
    <property type="method" value="X-ray"/>
    <property type="resolution" value="1.70 A"/>
    <property type="chains" value="A=113-250"/>
</dbReference>
<dbReference type="PDB" id="6Y78">
    <property type="method" value="X-ray"/>
    <property type="resolution" value="1.70 A"/>
    <property type="chains" value="A=113-250"/>
</dbReference>
<dbReference type="PDB" id="6ZVF">
    <property type="method" value="X-ray"/>
    <property type="resolution" value="1.90 A"/>
    <property type="chains" value="P=57-65"/>
</dbReference>
<dbReference type="PDB" id="7BE3">
    <property type="method" value="X-ray"/>
    <property type="resolution" value="1.25 A"/>
    <property type="chains" value="A=114-250"/>
</dbReference>
<dbReference type="PDB" id="7CXA">
    <property type="method" value="X-ray"/>
    <property type="resolution" value="1.97 A"/>
    <property type="chains" value="A/B=108-250"/>
</dbReference>
<dbReference type="PDB" id="7DF5">
    <property type="method" value="X-ray"/>
    <property type="resolution" value="1.08 A"/>
    <property type="chains" value="A=108-250"/>
</dbReference>
<dbReference type="PDB" id="7RDO">
    <property type="method" value="X-ray"/>
    <property type="resolution" value="1.99 A"/>
    <property type="chains" value="A=112-250"/>
</dbReference>
<dbReference type="PDB" id="7RDP">
    <property type="method" value="X-ray"/>
    <property type="resolution" value="1.96 A"/>
    <property type="chains" value="A=112-250"/>
</dbReference>
<dbReference type="PDB" id="7RGX">
    <property type="method" value="X-ray"/>
    <property type="resolution" value="1.58 A"/>
    <property type="chains" value="A=114-250"/>
</dbReference>
<dbReference type="PDB" id="7RGY">
    <property type="method" value="X-ray"/>
    <property type="resolution" value="1.34 A"/>
    <property type="chains" value="A=114-250"/>
</dbReference>
<dbReference type="PDB" id="7RGZ">
    <property type="method" value="X-ray"/>
    <property type="resolution" value="1.49 A"/>
    <property type="chains" value="A=114-250"/>
</dbReference>
<dbReference type="PDB" id="7RH0">
    <property type="method" value="X-ray"/>
    <property type="resolution" value="1.49 A"/>
    <property type="chains" value="A=114-250"/>
</dbReference>
<dbReference type="PDB" id="7RH1">
    <property type="method" value="X-ray"/>
    <property type="resolution" value="1.44 A"/>
    <property type="chains" value="A=114-250"/>
</dbReference>
<dbReference type="PDB" id="7RH3">
    <property type="method" value="X-ray"/>
    <property type="resolution" value="1.05 A"/>
    <property type="chains" value="A=114-250"/>
</dbReference>
<dbReference type="PDB" id="7RH4">
    <property type="method" value="X-ray"/>
    <property type="resolution" value="1.20 A"/>
    <property type="chains" value="A=114-250"/>
</dbReference>
<dbReference type="PDB" id="7XFA">
    <property type="method" value="X-ray"/>
    <property type="resolution" value="0.98 A"/>
    <property type="chains" value="A=108-250"/>
</dbReference>
<dbReference type="PDB" id="7ZQX">
    <property type="method" value="X-ray"/>
    <property type="resolution" value="1.05 A"/>
    <property type="chains" value="A=114-250"/>
</dbReference>
<dbReference type="PDB" id="8BZ3">
    <property type="method" value="X-ray"/>
    <property type="resolution" value="1.31 A"/>
    <property type="chains" value="A=107-250"/>
</dbReference>
<dbReference type="PDB" id="8ITX">
    <property type="method" value="X-ray"/>
    <property type="resolution" value="1.12 A"/>
    <property type="chains" value="A/B=72-250"/>
</dbReference>
<dbReference type="PDB" id="8ITZ">
    <property type="method" value="X-ray"/>
    <property type="resolution" value="1.22 A"/>
    <property type="chains" value="A=72-250"/>
</dbReference>
<dbReference type="PDB" id="8OJI">
    <property type="method" value="X-ray"/>
    <property type="resolution" value="1.75 A"/>
    <property type="chains" value="A=113-250"/>
</dbReference>
<dbReference type="PDB" id="8OJK">
    <property type="method" value="X-ray"/>
    <property type="resolution" value="1.80 A"/>
    <property type="chains" value="A=113-250"/>
</dbReference>
<dbReference type="PDB" id="8OJM">
    <property type="method" value="X-ray"/>
    <property type="resolution" value="1.80 A"/>
    <property type="chains" value="A=113-250"/>
</dbReference>
<dbReference type="PDB" id="8OJO">
    <property type="method" value="X-ray"/>
    <property type="resolution" value="1.80 A"/>
    <property type="chains" value="A=113-250"/>
</dbReference>
<dbReference type="PDB" id="8PBF">
    <property type="method" value="X-ray"/>
    <property type="resolution" value="1.14 A"/>
    <property type="chains" value="A=113-250"/>
</dbReference>
<dbReference type="PDB" id="8PF9">
    <property type="method" value="X-ray"/>
    <property type="resolution" value="1.09 A"/>
    <property type="chains" value="A=113-250"/>
</dbReference>
<dbReference type="PDB" id="8PFF">
    <property type="method" value="X-ray"/>
    <property type="resolution" value="1.08 A"/>
    <property type="chains" value="A=113-250"/>
</dbReference>
<dbReference type="PDB" id="8PPN">
    <property type="method" value="X-ray"/>
    <property type="resolution" value="1.80 A"/>
    <property type="chains" value="A=113-250"/>
</dbReference>
<dbReference type="PDB" id="8RMT">
    <property type="method" value="X-ray"/>
    <property type="resolution" value="1.25 A"/>
    <property type="chains" value="A=113-250"/>
</dbReference>
<dbReference type="PDB" id="8RMU">
    <property type="method" value="X-ray"/>
    <property type="resolution" value="1.20 A"/>
    <property type="chains" value="A=113-250"/>
</dbReference>
<dbReference type="PDB" id="8RMV">
    <property type="method" value="X-ray"/>
    <property type="resolution" value="1.35 A"/>
    <property type="chains" value="A=113-250"/>
</dbReference>
<dbReference type="PDB" id="8RR7">
    <property type="method" value="X-ray"/>
    <property type="resolution" value="1.60 A"/>
    <property type="chains" value="A=113-250"/>
</dbReference>
<dbReference type="PDB" id="8RR8">
    <property type="method" value="X-ray"/>
    <property type="resolution" value="1.50 A"/>
    <property type="chains" value="A=113-250"/>
</dbReference>
<dbReference type="PDB" id="8RR9">
    <property type="method" value="X-ray"/>
    <property type="resolution" value="1.25 A"/>
    <property type="chains" value="A=113-250"/>
</dbReference>
<dbReference type="PDB" id="8RRA">
    <property type="method" value="X-ray"/>
    <property type="resolution" value="1.30 A"/>
    <property type="chains" value="A=113-250"/>
</dbReference>
<dbReference type="PDB" id="8RRB">
    <property type="method" value="X-ray"/>
    <property type="resolution" value="1.20 A"/>
    <property type="chains" value="A=113-250"/>
</dbReference>
<dbReference type="PDB" id="8RRC">
    <property type="method" value="X-ray"/>
    <property type="resolution" value="1.50 A"/>
    <property type="chains" value="A=113-250"/>
</dbReference>
<dbReference type="PDB" id="8RRE">
    <property type="method" value="X-ray"/>
    <property type="resolution" value="1.21 A"/>
    <property type="chains" value="A=113-250"/>
</dbReference>
<dbReference type="PDB" id="8RRF">
    <property type="method" value="X-ray"/>
    <property type="resolution" value="1.25 A"/>
    <property type="chains" value="A=113-250"/>
</dbReference>
<dbReference type="PDB" id="8RRG">
    <property type="method" value="X-ray"/>
    <property type="resolution" value="1.40 A"/>
    <property type="chains" value="A=113-250"/>
</dbReference>
<dbReference type="PDB" id="8S67">
    <property type="method" value="X-ray"/>
    <property type="resolution" value="1.10 A"/>
    <property type="chains" value="A=113-250"/>
</dbReference>
<dbReference type="PDB" id="8YMD">
    <property type="method" value="X-ray"/>
    <property type="resolution" value="1.08 A"/>
    <property type="chains" value="A=111-250"/>
</dbReference>
<dbReference type="PDB" id="8Z1S">
    <property type="method" value="X-ray"/>
    <property type="resolution" value="2.00 A"/>
    <property type="chains" value="A/B=72-250"/>
</dbReference>
<dbReference type="PDB" id="8Z1T">
    <property type="method" value="X-ray"/>
    <property type="resolution" value="2.00 A"/>
    <property type="chains" value="A=72-250"/>
</dbReference>
<dbReference type="PDB" id="8Z25">
    <property type="method" value="X-ray"/>
    <property type="resolution" value="1.72 A"/>
    <property type="chains" value="A=72-250"/>
</dbReference>
<dbReference type="PDB" id="8ZUV">
    <property type="method" value="X-ray"/>
    <property type="resolution" value="1.45 A"/>
    <property type="chains" value="A=108-250"/>
</dbReference>
<dbReference type="PDBsum" id="1A3K"/>
<dbReference type="PDBsum" id="1KJL"/>
<dbReference type="PDBsum" id="1KJR"/>
<dbReference type="PDBsum" id="2NMN"/>
<dbReference type="PDBsum" id="2NMO"/>
<dbReference type="PDBsum" id="2NN8"/>
<dbReference type="PDBsum" id="2XG3"/>
<dbReference type="PDBsum" id="3AYA"/>
<dbReference type="PDBsum" id="3AYC"/>
<dbReference type="PDBsum" id="3AYD"/>
<dbReference type="PDBsum" id="3AYE"/>
<dbReference type="PDBsum" id="3T1L"/>
<dbReference type="PDBsum" id="3T1M"/>
<dbReference type="PDBsum" id="3ZSJ"/>
<dbReference type="PDBsum" id="3ZSK"/>
<dbReference type="PDBsum" id="3ZSL"/>
<dbReference type="PDBsum" id="3ZSM"/>
<dbReference type="PDBsum" id="4BLI"/>
<dbReference type="PDBsum" id="4BLJ"/>
<dbReference type="PDBsum" id="4BM8"/>
<dbReference type="PDBsum" id="4JC1"/>
<dbReference type="PDBsum" id="4JCK"/>
<dbReference type="PDBsum" id="4LBJ"/>
<dbReference type="PDBsum" id="4LBK"/>
<dbReference type="PDBsum" id="4LBL"/>
<dbReference type="PDBsum" id="4LBM"/>
<dbReference type="PDBsum" id="4LBN"/>
<dbReference type="PDBsum" id="4LBO"/>
<dbReference type="PDBsum" id="4R9A"/>
<dbReference type="PDBsum" id="4R9B"/>
<dbReference type="PDBsum" id="4R9C"/>
<dbReference type="PDBsum" id="4R9D"/>
<dbReference type="PDBsum" id="4RL7"/>
<dbReference type="PDBsum" id="4XBN"/>
<dbReference type="PDBsum" id="5E88"/>
<dbReference type="PDBsum" id="5E89"/>
<dbReference type="PDBsum" id="5E8A"/>
<dbReference type="PDBsum" id="5EXO"/>
<dbReference type="PDBsum" id="5H9P"/>
<dbReference type="PDBsum" id="5H9R"/>
<dbReference type="PDBsum" id="5IUQ"/>
<dbReference type="PDBsum" id="5NF7"/>
<dbReference type="PDBsum" id="5NF9"/>
<dbReference type="PDBsum" id="5NFA"/>
<dbReference type="PDBsum" id="5NFB"/>
<dbReference type="PDBsum" id="5NFC"/>
<dbReference type="PDBsum" id="5OAX"/>
<dbReference type="PDBsum" id="5ODY"/>
<dbReference type="PDBsum" id="6B8K"/>
<dbReference type="PDBsum" id="6EOG"/>
<dbReference type="PDBsum" id="6EOL"/>
<dbReference type="PDBsum" id="6EXY"/>
<dbReference type="PDBsum" id="6EYM"/>
<dbReference type="PDBsum" id="6F2Q"/>
<dbReference type="PDBsum" id="6F6Y"/>
<dbReference type="PDBsum" id="6FK2"/>
<dbReference type="PDBsum" id="6FOF"/>
<dbReference type="PDBsum" id="6G0V"/>
<dbReference type="PDBsum" id="6H64"/>
<dbReference type="PDBsum" id="6I74"/>
<dbReference type="PDBsum" id="6I75"/>
<dbReference type="PDBsum" id="6I76"/>
<dbReference type="PDBsum" id="6I77"/>
<dbReference type="PDBsum" id="6I78"/>
<dbReference type="PDBsum" id="6KXA"/>
<dbReference type="PDBsum" id="6KXB"/>
<dbReference type="PDBsum" id="6Q0Q"/>
<dbReference type="PDBsum" id="6Q17"/>
<dbReference type="PDBsum" id="6QGE"/>
<dbReference type="PDBsum" id="6QGF"/>
<dbReference type="PDBsum" id="6QLN"/>
<dbReference type="PDBsum" id="6QLO"/>
<dbReference type="PDBsum" id="6QLP"/>
<dbReference type="PDBsum" id="6QLQ"/>
<dbReference type="PDBsum" id="6QLR"/>
<dbReference type="PDBsum" id="6QLS"/>
<dbReference type="PDBsum" id="6QLT"/>
<dbReference type="PDBsum" id="6QLU"/>
<dbReference type="PDBsum" id="6RHL"/>
<dbReference type="PDBsum" id="6RHM"/>
<dbReference type="PDBsum" id="6RZF"/>
<dbReference type="PDBsum" id="6RZG"/>
<dbReference type="PDBsum" id="6RZH"/>
<dbReference type="PDBsum" id="6RZI"/>
<dbReference type="PDBsum" id="6RZJ"/>
<dbReference type="PDBsum" id="6RZK"/>
<dbReference type="PDBsum" id="6RZL"/>
<dbReference type="PDBsum" id="6RZM"/>
<dbReference type="PDBsum" id="6TF6"/>
<dbReference type="PDBsum" id="6TF7"/>
<dbReference type="PDBsum" id="6Y4C"/>
<dbReference type="PDBsum" id="6Y78"/>
<dbReference type="PDBsum" id="6ZVF"/>
<dbReference type="PDBsum" id="7BE3"/>
<dbReference type="PDBsum" id="7CXA"/>
<dbReference type="PDBsum" id="7DF5"/>
<dbReference type="PDBsum" id="7RDO"/>
<dbReference type="PDBsum" id="7RDP"/>
<dbReference type="PDBsum" id="7RGX"/>
<dbReference type="PDBsum" id="7RGY"/>
<dbReference type="PDBsum" id="7RGZ"/>
<dbReference type="PDBsum" id="7RH0"/>
<dbReference type="PDBsum" id="7RH1"/>
<dbReference type="PDBsum" id="7RH3"/>
<dbReference type="PDBsum" id="7RH4"/>
<dbReference type="PDBsum" id="7XFA"/>
<dbReference type="PDBsum" id="7ZQX"/>
<dbReference type="PDBsum" id="8BZ3"/>
<dbReference type="PDBsum" id="8ITX"/>
<dbReference type="PDBsum" id="8ITZ"/>
<dbReference type="PDBsum" id="8OJI"/>
<dbReference type="PDBsum" id="8OJK"/>
<dbReference type="PDBsum" id="8OJM"/>
<dbReference type="PDBsum" id="8OJO"/>
<dbReference type="PDBsum" id="8PBF"/>
<dbReference type="PDBsum" id="8PF9"/>
<dbReference type="PDBsum" id="8PFF"/>
<dbReference type="PDBsum" id="8PPN"/>
<dbReference type="PDBsum" id="8RMT"/>
<dbReference type="PDBsum" id="8RMU"/>
<dbReference type="PDBsum" id="8RMV"/>
<dbReference type="PDBsum" id="8RR7"/>
<dbReference type="PDBsum" id="8RR8"/>
<dbReference type="PDBsum" id="8RR9"/>
<dbReference type="PDBsum" id="8RRA"/>
<dbReference type="PDBsum" id="8RRB"/>
<dbReference type="PDBsum" id="8RRC"/>
<dbReference type="PDBsum" id="8RRE"/>
<dbReference type="PDBsum" id="8RRF"/>
<dbReference type="PDBsum" id="8RRG"/>
<dbReference type="PDBsum" id="8S67"/>
<dbReference type="PDBsum" id="8YMD"/>
<dbReference type="PDBsum" id="8Z1S"/>
<dbReference type="PDBsum" id="8Z1T"/>
<dbReference type="PDBsum" id="8Z25"/>
<dbReference type="PDBsum" id="8ZUV"/>
<dbReference type="BMRB" id="P17931"/>
<dbReference type="SMR" id="P17931"/>
<dbReference type="BioGRID" id="110149">
    <property type="interactions" value="344"/>
</dbReference>
<dbReference type="CORUM" id="P17931"/>
<dbReference type="DIP" id="DIP-45623N"/>
<dbReference type="FunCoup" id="P17931">
    <property type="interactions" value="133"/>
</dbReference>
<dbReference type="IntAct" id="P17931">
    <property type="interactions" value="236"/>
</dbReference>
<dbReference type="MINT" id="P17931"/>
<dbReference type="STRING" id="9606.ENSP00000254301"/>
<dbReference type="BindingDB" id="P17931"/>
<dbReference type="ChEMBL" id="CHEMBL4531"/>
<dbReference type="DrugBank" id="DB01827">
    <property type="generic name" value="2,3,5,6-Tetrafluoro-4-Methoxy-Benzamide"/>
</dbReference>
<dbReference type="DrugBank" id="DB04465">
    <property type="generic name" value="Lactose"/>
</dbReference>
<dbReference type="DrugBank" id="DB12895">
    <property type="generic name" value="Olitigaltin"/>
</dbReference>
<dbReference type="DrugCentral" id="P17931"/>
<dbReference type="MoonDB" id="P17931">
    <property type="type" value="Curated"/>
</dbReference>
<dbReference type="TCDB" id="9.B.9.1.14">
    <property type="family name" value="the urate transporter (uat) family"/>
</dbReference>
<dbReference type="UniLectin" id="P17931"/>
<dbReference type="GlyGen" id="P17931">
    <property type="glycosylation" value="4 sites, 1 O-linked glycan (1 site)"/>
</dbReference>
<dbReference type="iPTMnet" id="P17931"/>
<dbReference type="PhosphoSitePlus" id="P17931"/>
<dbReference type="SwissPalm" id="P17931"/>
<dbReference type="BioMuta" id="LGALS3"/>
<dbReference type="DMDM" id="215274262"/>
<dbReference type="REPRODUCTION-2DPAGE" id="IPI00465431"/>
<dbReference type="jPOST" id="P17931"/>
<dbReference type="MassIVE" id="P17931"/>
<dbReference type="PaxDb" id="9606-ENSP00000254301"/>
<dbReference type="PeptideAtlas" id="P17931"/>
<dbReference type="PRIDE" id="P17931"/>
<dbReference type="ProteomicsDB" id="53526"/>
<dbReference type="Pumba" id="P17931"/>
<dbReference type="ABCD" id="P17931">
    <property type="antibodies" value="1 sequenced antibody"/>
</dbReference>
<dbReference type="Antibodypedia" id="161">
    <property type="antibodies" value="1883 antibodies from 51 providers"/>
</dbReference>
<dbReference type="DNASU" id="3958"/>
<dbReference type="Ensembl" id="ENST00000254301.14">
    <property type="protein sequence ID" value="ENSP00000254301.9"/>
    <property type="gene ID" value="ENSG00000131981.16"/>
</dbReference>
<dbReference type="GeneID" id="3958"/>
<dbReference type="KEGG" id="hsa:3958"/>
<dbReference type="MANE-Select" id="ENST00000254301.14">
    <property type="protein sequence ID" value="ENSP00000254301.9"/>
    <property type="RefSeq nucleotide sequence ID" value="NM_002306.4"/>
    <property type="RefSeq protein sequence ID" value="NP_002297.2"/>
</dbReference>
<dbReference type="UCSC" id="uc001xbr.4">
    <property type="organism name" value="human"/>
</dbReference>
<dbReference type="AGR" id="HGNC:6563"/>
<dbReference type="CTD" id="3958"/>
<dbReference type="DisGeNET" id="3958"/>
<dbReference type="GeneCards" id="LGALS3"/>
<dbReference type="HGNC" id="HGNC:6563">
    <property type="gene designation" value="LGALS3"/>
</dbReference>
<dbReference type="HPA" id="ENSG00000131981">
    <property type="expression patterns" value="Tissue enhanced (intestine)"/>
</dbReference>
<dbReference type="MIM" id="153619">
    <property type="type" value="gene"/>
</dbReference>
<dbReference type="neXtProt" id="NX_P17931"/>
<dbReference type="OpenTargets" id="ENSG00000131981"/>
<dbReference type="PharmGKB" id="PA30340"/>
<dbReference type="VEuPathDB" id="HostDB:ENSG00000131981"/>
<dbReference type="eggNOG" id="KOG3587">
    <property type="taxonomic scope" value="Eukaryota"/>
</dbReference>
<dbReference type="GeneTree" id="ENSGT00940000157224"/>
<dbReference type="HOGENOM" id="CLU_072823_0_0_1"/>
<dbReference type="InParanoid" id="P17931"/>
<dbReference type="OMA" id="GHYPPEG"/>
<dbReference type="OrthoDB" id="8942303at2759"/>
<dbReference type="PAN-GO" id="P17931">
    <property type="GO annotations" value="14 GO annotations based on evolutionary models"/>
</dbReference>
<dbReference type="PhylomeDB" id="P17931"/>
<dbReference type="TreeFam" id="TF315551"/>
<dbReference type="PathwayCommons" id="P17931"/>
<dbReference type="Reactome" id="R-HSA-6798695">
    <property type="pathway name" value="Neutrophil degranulation"/>
</dbReference>
<dbReference type="Reactome" id="R-HSA-879415">
    <property type="pathway name" value="Advanced glycosylation endproduct receptor signaling"/>
</dbReference>
<dbReference type="Reactome" id="R-HSA-8939246">
    <property type="pathway name" value="RUNX1 regulates transcription of genes involved in differentiation of myeloid cells"/>
</dbReference>
<dbReference type="Reactome" id="R-HSA-8941333">
    <property type="pathway name" value="RUNX2 regulates genes involved in differentiation of myeloid cells"/>
</dbReference>
<dbReference type="SignaLink" id="P17931"/>
<dbReference type="SIGNOR" id="P17931"/>
<dbReference type="BioGRID-ORCS" id="3958">
    <property type="hits" value="14 hits in 1154 CRISPR screens"/>
</dbReference>
<dbReference type="CD-CODE" id="F47B63CC">
    <property type="entry name" value="Galectin complex"/>
</dbReference>
<dbReference type="ChiTaRS" id="LGALS3">
    <property type="organism name" value="human"/>
</dbReference>
<dbReference type="EvolutionaryTrace" id="P17931"/>
<dbReference type="GeneWiki" id="LGALS3"/>
<dbReference type="GenomeRNAi" id="3958"/>
<dbReference type="Pharos" id="P17931">
    <property type="development level" value="Tchem"/>
</dbReference>
<dbReference type="PRO" id="PR:P17931"/>
<dbReference type="Proteomes" id="UP000005640">
    <property type="component" value="Chromosome 14"/>
</dbReference>
<dbReference type="RNAct" id="P17931">
    <property type="molecule type" value="protein"/>
</dbReference>
<dbReference type="Bgee" id="ENSG00000131981">
    <property type="expression patterns" value="Expressed in colonic mucosa and 209 other cell types or tissues"/>
</dbReference>
<dbReference type="ExpressionAtlas" id="P17931">
    <property type="expression patterns" value="baseline and differential"/>
</dbReference>
<dbReference type="GO" id="GO:0009986">
    <property type="term" value="C:cell surface"/>
    <property type="evidence" value="ECO:0000250"/>
    <property type="project" value="ARUK-UCL"/>
</dbReference>
<dbReference type="GO" id="GO:0062023">
    <property type="term" value="C:collagen-containing extracellular matrix"/>
    <property type="evidence" value="ECO:0007005"/>
    <property type="project" value="BHF-UCL"/>
</dbReference>
<dbReference type="GO" id="GO:0005737">
    <property type="term" value="C:cytoplasm"/>
    <property type="evidence" value="ECO:0000314"/>
    <property type="project" value="MGI"/>
</dbReference>
<dbReference type="GO" id="GO:0005829">
    <property type="term" value="C:cytosol"/>
    <property type="evidence" value="ECO:0000314"/>
    <property type="project" value="HPA"/>
</dbReference>
<dbReference type="GO" id="GO:0070062">
    <property type="term" value="C:extracellular exosome"/>
    <property type="evidence" value="ECO:0007005"/>
    <property type="project" value="UniProtKB"/>
</dbReference>
<dbReference type="GO" id="GO:0005576">
    <property type="term" value="C:extracellular region"/>
    <property type="evidence" value="ECO:0007005"/>
    <property type="project" value="BHF-UCL"/>
</dbReference>
<dbReference type="GO" id="GO:0005615">
    <property type="term" value="C:extracellular space"/>
    <property type="evidence" value="ECO:0000314"/>
    <property type="project" value="UniProt"/>
</dbReference>
<dbReference type="GO" id="GO:0101003">
    <property type="term" value="C:ficolin-1-rich granule membrane"/>
    <property type="evidence" value="ECO:0000304"/>
    <property type="project" value="Reactome"/>
</dbReference>
<dbReference type="GO" id="GO:0001772">
    <property type="term" value="C:immunological synapse"/>
    <property type="evidence" value="ECO:0000314"/>
    <property type="project" value="BHF-UCL"/>
</dbReference>
<dbReference type="GO" id="GO:0016020">
    <property type="term" value="C:membrane"/>
    <property type="evidence" value="ECO:0007005"/>
    <property type="project" value="UniProtKB"/>
</dbReference>
<dbReference type="GO" id="GO:0005743">
    <property type="term" value="C:mitochondrial inner membrane"/>
    <property type="evidence" value="ECO:0000314"/>
    <property type="project" value="UniProtKB"/>
</dbReference>
<dbReference type="GO" id="GO:0005654">
    <property type="term" value="C:nucleoplasm"/>
    <property type="evidence" value="ECO:0000314"/>
    <property type="project" value="HPA"/>
</dbReference>
<dbReference type="GO" id="GO:0005634">
    <property type="term" value="C:nucleus"/>
    <property type="evidence" value="ECO:0000314"/>
    <property type="project" value="MGI"/>
</dbReference>
<dbReference type="GO" id="GO:0005886">
    <property type="term" value="C:plasma membrane"/>
    <property type="evidence" value="ECO:0000304"/>
    <property type="project" value="Reactome"/>
</dbReference>
<dbReference type="GO" id="GO:0030667">
    <property type="term" value="C:secretory granule membrane"/>
    <property type="evidence" value="ECO:0000304"/>
    <property type="project" value="Reactome"/>
</dbReference>
<dbReference type="GO" id="GO:0005681">
    <property type="term" value="C:spliceosomal complex"/>
    <property type="evidence" value="ECO:0007669"/>
    <property type="project" value="UniProtKB-KW"/>
</dbReference>
<dbReference type="GO" id="GO:0030246">
    <property type="term" value="F:carbohydrate binding"/>
    <property type="evidence" value="ECO:0000269"/>
    <property type="project" value="DisProt"/>
</dbReference>
<dbReference type="GO" id="GO:0042056">
    <property type="term" value="F:chemoattractant activity"/>
    <property type="evidence" value="ECO:0000314"/>
    <property type="project" value="BHF-UCL"/>
</dbReference>
<dbReference type="GO" id="GO:0048030">
    <property type="term" value="F:disaccharide binding"/>
    <property type="evidence" value="ECO:0000318"/>
    <property type="project" value="GO_Central"/>
</dbReference>
<dbReference type="GO" id="GO:0019863">
    <property type="term" value="F:IgE binding"/>
    <property type="evidence" value="ECO:0000314"/>
    <property type="project" value="BHF-UCL"/>
</dbReference>
<dbReference type="GO" id="GO:0043236">
    <property type="term" value="F:laminin binding"/>
    <property type="evidence" value="ECO:0000314"/>
    <property type="project" value="BHF-UCL"/>
</dbReference>
<dbReference type="GO" id="GO:0140693">
    <property type="term" value="F:molecular condensate scaffold activity"/>
    <property type="evidence" value="ECO:0000314"/>
    <property type="project" value="DisProt"/>
</dbReference>
<dbReference type="GO" id="GO:0019903">
    <property type="term" value="F:protein phosphatase binding"/>
    <property type="evidence" value="ECO:0000353"/>
    <property type="project" value="ARUK-UCL"/>
</dbReference>
<dbReference type="GO" id="GO:0004864">
    <property type="term" value="F:protein phosphatase inhibitor activity"/>
    <property type="evidence" value="ECO:0000314"/>
    <property type="project" value="ARUK-UCL"/>
</dbReference>
<dbReference type="GO" id="GO:0141069">
    <property type="term" value="F:receptor ligand inhibitor activity"/>
    <property type="evidence" value="ECO:0000314"/>
    <property type="project" value="UniProt"/>
</dbReference>
<dbReference type="GO" id="GO:0003723">
    <property type="term" value="F:RNA binding"/>
    <property type="evidence" value="ECO:0007005"/>
    <property type="project" value="UniProtKB"/>
</dbReference>
<dbReference type="GO" id="GO:0030547">
    <property type="term" value="F:signaling receptor inhibitor activity"/>
    <property type="evidence" value="ECO:0000314"/>
    <property type="project" value="UniProt"/>
</dbReference>
<dbReference type="GO" id="GO:0048245">
    <property type="term" value="P:eosinophil chemotaxis"/>
    <property type="evidence" value="ECO:0000314"/>
    <property type="project" value="BHF-UCL"/>
</dbReference>
<dbReference type="GO" id="GO:0030855">
    <property type="term" value="P:epithelial cell differentiation"/>
    <property type="evidence" value="ECO:0000270"/>
    <property type="project" value="UniProtKB"/>
</dbReference>
<dbReference type="GO" id="GO:0045087">
    <property type="term" value="P:innate immune response"/>
    <property type="evidence" value="ECO:0007669"/>
    <property type="project" value="UniProtKB-KW"/>
</dbReference>
<dbReference type="GO" id="GO:0048246">
    <property type="term" value="P:macrophage chemotaxis"/>
    <property type="evidence" value="ECO:0000314"/>
    <property type="project" value="BHF-UCL"/>
</dbReference>
<dbReference type="GO" id="GO:0002548">
    <property type="term" value="P:monocyte chemotaxis"/>
    <property type="evidence" value="ECO:0000314"/>
    <property type="project" value="BHF-UCL"/>
</dbReference>
<dbReference type="GO" id="GO:0071674">
    <property type="term" value="P:mononuclear cell migration"/>
    <property type="evidence" value="ECO:0000314"/>
    <property type="project" value="BHF-UCL"/>
</dbReference>
<dbReference type="GO" id="GO:0006397">
    <property type="term" value="P:mRNA processing"/>
    <property type="evidence" value="ECO:0007669"/>
    <property type="project" value="UniProtKB-KW"/>
</dbReference>
<dbReference type="GO" id="GO:0045806">
    <property type="term" value="P:negative regulation of endocytosis"/>
    <property type="evidence" value="ECO:0000314"/>
    <property type="project" value="BHF-UCL"/>
</dbReference>
<dbReference type="GO" id="GO:2001237">
    <property type="term" value="P:negative regulation of extrinsic apoptotic signaling pathway"/>
    <property type="evidence" value="ECO:0000314"/>
    <property type="project" value="BHF-UCL"/>
</dbReference>
<dbReference type="GO" id="GO:2000521">
    <property type="term" value="P:negative regulation of immunological synapse formation"/>
    <property type="evidence" value="ECO:0000250"/>
    <property type="project" value="BHF-UCL"/>
</dbReference>
<dbReference type="GO" id="GO:0051134">
    <property type="term" value="P:negative regulation of NK T cell activation"/>
    <property type="evidence" value="ECO:0000314"/>
    <property type="project" value="UniProt"/>
</dbReference>
<dbReference type="GO" id="GO:2001189">
    <property type="term" value="P:negative regulation of T cell activation via T cell receptor contact with antigen bound to MHC molecule on antigen presenting cell"/>
    <property type="evidence" value="ECO:0000250"/>
    <property type="project" value="BHF-UCL"/>
</dbReference>
<dbReference type="GO" id="GO:0050860">
    <property type="term" value="P:negative regulation of T cell receptor signaling pathway"/>
    <property type="evidence" value="ECO:0000250"/>
    <property type="project" value="BHF-UCL"/>
</dbReference>
<dbReference type="GO" id="GO:0030593">
    <property type="term" value="P:neutrophil chemotaxis"/>
    <property type="evidence" value="ECO:0000314"/>
    <property type="project" value="BHF-UCL"/>
</dbReference>
<dbReference type="GO" id="GO:0050918">
    <property type="term" value="P:positive chemotaxis"/>
    <property type="evidence" value="ECO:0000314"/>
    <property type="project" value="BHF-UCL"/>
</dbReference>
<dbReference type="GO" id="GO:0090280">
    <property type="term" value="P:positive regulation of calcium ion import"/>
    <property type="evidence" value="ECO:0000314"/>
    <property type="project" value="BHF-UCL"/>
</dbReference>
<dbReference type="GO" id="GO:0071677">
    <property type="term" value="P:positive regulation of mononuclear cell migration"/>
    <property type="evidence" value="ECO:0000314"/>
    <property type="project" value="BHF-UCL"/>
</dbReference>
<dbReference type="GO" id="GO:1903078">
    <property type="term" value="P:positive regulation of protein localization to plasma membrane"/>
    <property type="evidence" value="ECO:0000314"/>
    <property type="project" value="ARUK-UCL"/>
</dbReference>
<dbReference type="GO" id="GO:0031334">
    <property type="term" value="P:positive regulation of protein-containing complex assembly"/>
    <property type="evidence" value="ECO:0000314"/>
    <property type="project" value="ARUK-UCL"/>
</dbReference>
<dbReference type="GO" id="GO:1902041">
    <property type="term" value="P:regulation of extrinsic apoptotic signaling pathway via death domain receptors"/>
    <property type="evidence" value="ECO:0000315"/>
    <property type="project" value="BHF-UCL"/>
</dbReference>
<dbReference type="GO" id="GO:0070232">
    <property type="term" value="P:regulation of T cell apoptotic process"/>
    <property type="evidence" value="ECO:0000314"/>
    <property type="project" value="BHF-UCL"/>
</dbReference>
<dbReference type="GO" id="GO:0042129">
    <property type="term" value="P:regulation of T cell proliferation"/>
    <property type="evidence" value="ECO:0000315"/>
    <property type="project" value="BHF-UCL"/>
</dbReference>
<dbReference type="GO" id="GO:0008380">
    <property type="term" value="P:RNA splicing"/>
    <property type="evidence" value="ECO:0007669"/>
    <property type="project" value="UniProtKB-KW"/>
</dbReference>
<dbReference type="CDD" id="cd00070">
    <property type="entry name" value="GLECT"/>
    <property type="match status" value="1"/>
</dbReference>
<dbReference type="DisProt" id="DP01332"/>
<dbReference type="FunFam" id="2.60.120.200:FF:000023">
    <property type="entry name" value="Galectin"/>
    <property type="match status" value="1"/>
</dbReference>
<dbReference type="Gene3D" id="2.60.120.200">
    <property type="match status" value="1"/>
</dbReference>
<dbReference type="IDEAL" id="IID00029"/>
<dbReference type="InterPro" id="IPR013320">
    <property type="entry name" value="ConA-like_dom_sf"/>
</dbReference>
<dbReference type="InterPro" id="IPR044156">
    <property type="entry name" value="Galectin-like"/>
</dbReference>
<dbReference type="InterPro" id="IPR001079">
    <property type="entry name" value="Galectin_CRD"/>
</dbReference>
<dbReference type="PANTHER" id="PTHR11346">
    <property type="entry name" value="GALECTIN"/>
    <property type="match status" value="1"/>
</dbReference>
<dbReference type="PANTHER" id="PTHR11346:SF26">
    <property type="entry name" value="GALECTIN-3"/>
    <property type="match status" value="1"/>
</dbReference>
<dbReference type="Pfam" id="PF00337">
    <property type="entry name" value="Gal-bind_lectin"/>
    <property type="match status" value="1"/>
</dbReference>
<dbReference type="SMART" id="SM00908">
    <property type="entry name" value="Gal-bind_lectin"/>
    <property type="match status" value="1"/>
</dbReference>
<dbReference type="SMART" id="SM00276">
    <property type="entry name" value="GLECT"/>
    <property type="match status" value="1"/>
</dbReference>
<dbReference type="SUPFAM" id="SSF49899">
    <property type="entry name" value="Concanavalin A-like lectins/glucanases"/>
    <property type="match status" value="1"/>
</dbReference>
<dbReference type="PROSITE" id="PS51304">
    <property type="entry name" value="GALECTIN"/>
    <property type="match status" value="1"/>
</dbReference>
<name>LEG3_HUMAN</name>
<reference key="1">
    <citation type="journal article" date="1990" name="Biochemistry">
        <title>Human IgE-binding protein: a soluble lectin exhibiting a highly conserved interspecies sequence and differential recognition of IgE glycoforms.</title>
        <authorList>
            <person name="Robertson M.W."/>
            <person name="Albrandt K."/>
            <person name="Keller D."/>
            <person name="Liu F.-T."/>
        </authorList>
    </citation>
    <scope>NUCLEOTIDE SEQUENCE [MRNA]</scope>
    <scope>VARIANTS HIS-64 AND PRO-98</scope>
</reference>
<reference key="2">
    <citation type="journal article" date="1990" name="Proc. Natl. Acad. Sci. U.S.A.">
        <title>Molecular cloning of a human macrophage lectin specific for galactose.</title>
        <authorList>
            <person name="Cherayil B."/>
            <person name="Chaitovitz S."/>
            <person name="Wong C."/>
            <person name="Pillai S."/>
        </authorList>
    </citation>
    <scope>NUCLEOTIDE SEQUENCE [MRNA]</scope>
    <scope>VARIANT PRO-98</scope>
    <source>
        <tissue>Carcinoma</tissue>
    </source>
</reference>
<reference key="3">
    <citation type="journal article" date="1991" name="Gene">
        <title>Human breast carcinoma cDNA encoding a galactoside-binding lectin homologous to mouse Mac-2 antigen.</title>
        <authorList>
            <person name="Oda Y."/>
            <person name="Leffler H."/>
            <person name="Sakakura Y."/>
            <person name="Kasai K."/>
            <person name="Barondes S.H."/>
        </authorList>
    </citation>
    <scope>NUCLEOTIDE SEQUENCE [MRNA]</scope>
    <scope>VARIANTS HIS-64 AND PRO-98</scope>
</reference>
<reference key="4">
    <citation type="journal article" date="1991" name="Cancer Res.">
        <title>Molecular cloning and chromosomal mapping of a human galactoside-binding protein.</title>
        <authorList>
            <person name="Raz A."/>
            <person name="Carmi P."/>
            <person name="Raz T."/>
            <person name="Hogan V."/>
            <person name="Mohamed A."/>
            <person name="Wolman S.R."/>
        </authorList>
    </citation>
    <scope>NUCLEOTIDE SEQUENCE [MRNA]</scope>
</reference>
<reference key="5">
    <citation type="journal article" date="1993" name="Proc. Natl. Acad. Sci. U.S.A.">
        <title>Decreased expression of Mac-2 (carbohydrate binding protein 35) and loss of its nuclear localization are associated with the neoplastic progression of colon carcinoma.</title>
        <authorList>
            <person name="Lotz M.M."/>
            <person name="Andrews C.W. Jr."/>
            <person name="Korzelius C.A."/>
            <person name="Lee E.C."/>
            <person name="Steele G.D. Jr."/>
            <person name="Clarke A."/>
            <person name="Mercurio A.M."/>
        </authorList>
    </citation>
    <scope>NUCLEOTIDE SEQUENCE [MRNA]</scope>
    <scope>SUBCELLULAR LOCATION</scope>
</reference>
<reference key="6">
    <citation type="journal article" date="1998" name="Arch. Biochem. Biophys.">
        <title>The human LGALS3 (galectin-3) gene: determination of the gene structure and functional characterization of the promoter.</title>
        <authorList>
            <person name="Kadrofske M.M."/>
            <person name="Openo K.P."/>
            <person name="Wang J.L."/>
        </authorList>
    </citation>
    <scope>NUCLEOTIDE SEQUENCE [GENOMIC DNA]</scope>
</reference>
<reference key="7">
    <citation type="submission" date="1997-08" db="EMBL/GenBank/DDBJ databases">
        <title>Human galectin-3 full-length cDNA.</title>
        <authorList>
            <person name="Kato S."/>
        </authorList>
    </citation>
    <scope>NUCLEOTIDE SEQUENCE [MRNA]</scope>
    <source>
        <tissue>Gastric adenocarcinoma</tissue>
    </source>
</reference>
<reference key="8">
    <citation type="journal article" date="2004" name="Nat. Genet.">
        <title>Complete sequencing and characterization of 21,243 full-length human cDNAs.</title>
        <authorList>
            <person name="Ota T."/>
            <person name="Suzuki Y."/>
            <person name="Nishikawa T."/>
            <person name="Otsuki T."/>
            <person name="Sugiyama T."/>
            <person name="Irie R."/>
            <person name="Wakamatsu A."/>
            <person name="Hayashi K."/>
            <person name="Sato H."/>
            <person name="Nagai K."/>
            <person name="Kimura K."/>
            <person name="Makita H."/>
            <person name="Sekine M."/>
            <person name="Obayashi M."/>
            <person name="Nishi T."/>
            <person name="Shibahara T."/>
            <person name="Tanaka T."/>
            <person name="Ishii S."/>
            <person name="Yamamoto J."/>
            <person name="Saito K."/>
            <person name="Kawai Y."/>
            <person name="Isono Y."/>
            <person name="Nakamura Y."/>
            <person name="Nagahari K."/>
            <person name="Murakami K."/>
            <person name="Yasuda T."/>
            <person name="Iwayanagi T."/>
            <person name="Wagatsuma M."/>
            <person name="Shiratori A."/>
            <person name="Sudo H."/>
            <person name="Hosoiri T."/>
            <person name="Kaku Y."/>
            <person name="Kodaira H."/>
            <person name="Kondo H."/>
            <person name="Sugawara M."/>
            <person name="Takahashi M."/>
            <person name="Kanda K."/>
            <person name="Yokoi T."/>
            <person name="Furuya T."/>
            <person name="Kikkawa E."/>
            <person name="Omura Y."/>
            <person name="Abe K."/>
            <person name="Kamihara K."/>
            <person name="Katsuta N."/>
            <person name="Sato K."/>
            <person name="Tanikawa M."/>
            <person name="Yamazaki M."/>
            <person name="Ninomiya K."/>
            <person name="Ishibashi T."/>
            <person name="Yamashita H."/>
            <person name="Murakawa K."/>
            <person name="Fujimori K."/>
            <person name="Tanai H."/>
            <person name="Kimata M."/>
            <person name="Watanabe M."/>
            <person name="Hiraoka S."/>
            <person name="Chiba Y."/>
            <person name="Ishida S."/>
            <person name="Ono Y."/>
            <person name="Takiguchi S."/>
            <person name="Watanabe S."/>
            <person name="Yosida M."/>
            <person name="Hotuta T."/>
            <person name="Kusano J."/>
            <person name="Kanehori K."/>
            <person name="Takahashi-Fujii A."/>
            <person name="Hara H."/>
            <person name="Tanase T.-O."/>
            <person name="Nomura Y."/>
            <person name="Togiya S."/>
            <person name="Komai F."/>
            <person name="Hara R."/>
            <person name="Takeuchi K."/>
            <person name="Arita M."/>
            <person name="Imose N."/>
            <person name="Musashino K."/>
            <person name="Yuuki H."/>
            <person name="Oshima A."/>
            <person name="Sasaki N."/>
            <person name="Aotsuka S."/>
            <person name="Yoshikawa Y."/>
            <person name="Matsunawa H."/>
            <person name="Ichihara T."/>
            <person name="Shiohata N."/>
            <person name="Sano S."/>
            <person name="Moriya S."/>
            <person name="Momiyama H."/>
            <person name="Satoh N."/>
            <person name="Takami S."/>
            <person name="Terashima Y."/>
            <person name="Suzuki O."/>
            <person name="Nakagawa S."/>
            <person name="Senoh A."/>
            <person name="Mizoguchi H."/>
            <person name="Goto Y."/>
            <person name="Shimizu F."/>
            <person name="Wakebe H."/>
            <person name="Hishigaki H."/>
            <person name="Watanabe T."/>
            <person name="Sugiyama A."/>
            <person name="Takemoto M."/>
            <person name="Kawakami B."/>
            <person name="Yamazaki M."/>
            <person name="Watanabe K."/>
            <person name="Kumagai A."/>
            <person name="Itakura S."/>
            <person name="Fukuzumi Y."/>
            <person name="Fujimori Y."/>
            <person name="Komiyama M."/>
            <person name="Tashiro H."/>
            <person name="Tanigami A."/>
            <person name="Fujiwara T."/>
            <person name="Ono T."/>
            <person name="Yamada K."/>
            <person name="Fujii Y."/>
            <person name="Ozaki K."/>
            <person name="Hirao M."/>
            <person name="Ohmori Y."/>
            <person name="Kawabata A."/>
            <person name="Hikiji T."/>
            <person name="Kobatake N."/>
            <person name="Inagaki H."/>
            <person name="Ikema Y."/>
            <person name="Okamoto S."/>
            <person name="Okitani R."/>
            <person name="Kawakami T."/>
            <person name="Noguchi S."/>
            <person name="Itoh T."/>
            <person name="Shigeta K."/>
            <person name="Senba T."/>
            <person name="Matsumura K."/>
            <person name="Nakajima Y."/>
            <person name="Mizuno T."/>
            <person name="Morinaga M."/>
            <person name="Sasaki M."/>
            <person name="Togashi T."/>
            <person name="Oyama M."/>
            <person name="Hata H."/>
            <person name="Watanabe M."/>
            <person name="Komatsu T."/>
            <person name="Mizushima-Sugano J."/>
            <person name="Satoh T."/>
            <person name="Shirai Y."/>
            <person name="Takahashi Y."/>
            <person name="Nakagawa K."/>
            <person name="Okumura K."/>
            <person name="Nagase T."/>
            <person name="Nomura N."/>
            <person name="Kikuchi H."/>
            <person name="Masuho Y."/>
            <person name="Yamashita R."/>
            <person name="Nakai K."/>
            <person name="Yada T."/>
            <person name="Nakamura Y."/>
            <person name="Ohara O."/>
            <person name="Isogai T."/>
            <person name="Sugano S."/>
        </authorList>
    </citation>
    <scope>NUCLEOTIDE SEQUENCE [LARGE SCALE MRNA]</scope>
    <source>
        <tissue>Thalamus</tissue>
    </source>
</reference>
<reference key="9">
    <citation type="submission" date="2004-06" db="EMBL/GenBank/DDBJ databases">
        <title>Cloning of human full open reading frames in Gateway(TM) system entry vector (pDONR201).</title>
        <authorList>
            <person name="Ebert L."/>
            <person name="Schick M."/>
            <person name="Neubert P."/>
            <person name="Schatten R."/>
            <person name="Henze S."/>
            <person name="Korn B."/>
        </authorList>
    </citation>
    <scope>NUCLEOTIDE SEQUENCE [LARGE SCALE MRNA]</scope>
</reference>
<reference key="10">
    <citation type="journal article" date="2003" name="Nature">
        <title>The DNA sequence and analysis of human chromosome 14.</title>
        <authorList>
            <person name="Heilig R."/>
            <person name="Eckenberg R."/>
            <person name="Petit J.-L."/>
            <person name="Fonknechten N."/>
            <person name="Da Silva C."/>
            <person name="Cattolico L."/>
            <person name="Levy M."/>
            <person name="Barbe V."/>
            <person name="De Berardinis V."/>
            <person name="Ureta-Vidal A."/>
            <person name="Pelletier E."/>
            <person name="Vico V."/>
            <person name="Anthouard V."/>
            <person name="Rowen L."/>
            <person name="Madan A."/>
            <person name="Qin S."/>
            <person name="Sun H."/>
            <person name="Du H."/>
            <person name="Pepin K."/>
            <person name="Artiguenave F."/>
            <person name="Robert C."/>
            <person name="Cruaud C."/>
            <person name="Bruels T."/>
            <person name="Jaillon O."/>
            <person name="Friedlander L."/>
            <person name="Samson G."/>
            <person name="Brottier P."/>
            <person name="Cure S."/>
            <person name="Segurens B."/>
            <person name="Aniere F."/>
            <person name="Samain S."/>
            <person name="Crespeau H."/>
            <person name="Abbasi N."/>
            <person name="Aiach N."/>
            <person name="Boscus D."/>
            <person name="Dickhoff R."/>
            <person name="Dors M."/>
            <person name="Dubois I."/>
            <person name="Friedman C."/>
            <person name="Gouyvenoux M."/>
            <person name="James R."/>
            <person name="Madan A."/>
            <person name="Mairey-Estrada B."/>
            <person name="Mangenot S."/>
            <person name="Martins N."/>
            <person name="Menard M."/>
            <person name="Oztas S."/>
            <person name="Ratcliffe A."/>
            <person name="Shaffer T."/>
            <person name="Trask B."/>
            <person name="Vacherie B."/>
            <person name="Bellemere C."/>
            <person name="Belser C."/>
            <person name="Besnard-Gonnet M."/>
            <person name="Bartol-Mavel D."/>
            <person name="Boutard M."/>
            <person name="Briez-Silla S."/>
            <person name="Combette S."/>
            <person name="Dufosse-Laurent V."/>
            <person name="Ferron C."/>
            <person name="Lechaplais C."/>
            <person name="Louesse C."/>
            <person name="Muselet D."/>
            <person name="Magdelenat G."/>
            <person name="Pateau E."/>
            <person name="Petit E."/>
            <person name="Sirvain-Trukniewicz P."/>
            <person name="Trybou A."/>
            <person name="Vega-Czarny N."/>
            <person name="Bataille E."/>
            <person name="Bluet E."/>
            <person name="Bordelais I."/>
            <person name="Dubois M."/>
            <person name="Dumont C."/>
            <person name="Guerin T."/>
            <person name="Haffray S."/>
            <person name="Hammadi R."/>
            <person name="Muanga J."/>
            <person name="Pellouin V."/>
            <person name="Robert D."/>
            <person name="Wunderle E."/>
            <person name="Gauguet G."/>
            <person name="Roy A."/>
            <person name="Sainte-Marthe L."/>
            <person name="Verdier J."/>
            <person name="Verdier-Discala C."/>
            <person name="Hillier L.W."/>
            <person name="Fulton L."/>
            <person name="McPherson J."/>
            <person name="Matsuda F."/>
            <person name="Wilson R."/>
            <person name="Scarpelli C."/>
            <person name="Gyapay G."/>
            <person name="Wincker P."/>
            <person name="Saurin W."/>
            <person name="Quetier F."/>
            <person name="Waterston R."/>
            <person name="Hood L."/>
            <person name="Weissenbach J."/>
        </authorList>
    </citation>
    <scope>NUCLEOTIDE SEQUENCE [LARGE SCALE GENOMIC DNA]</scope>
</reference>
<reference key="11">
    <citation type="submission" date="2005-07" db="EMBL/GenBank/DDBJ databases">
        <authorList>
            <person name="Mural R.J."/>
            <person name="Istrail S."/>
            <person name="Sutton G.G."/>
            <person name="Florea L."/>
            <person name="Halpern A.L."/>
            <person name="Mobarry C.M."/>
            <person name="Lippert R."/>
            <person name="Walenz B."/>
            <person name="Shatkay H."/>
            <person name="Dew I."/>
            <person name="Miller J.R."/>
            <person name="Flanigan M.J."/>
            <person name="Edwards N.J."/>
            <person name="Bolanos R."/>
            <person name="Fasulo D."/>
            <person name="Halldorsson B.V."/>
            <person name="Hannenhalli S."/>
            <person name="Turner R."/>
            <person name="Yooseph S."/>
            <person name="Lu F."/>
            <person name="Nusskern D.R."/>
            <person name="Shue B.C."/>
            <person name="Zheng X.H."/>
            <person name="Zhong F."/>
            <person name="Delcher A.L."/>
            <person name="Huson D.H."/>
            <person name="Kravitz S.A."/>
            <person name="Mouchard L."/>
            <person name="Reinert K."/>
            <person name="Remington K.A."/>
            <person name="Clark A.G."/>
            <person name="Waterman M.S."/>
            <person name="Eichler E.E."/>
            <person name="Adams M.D."/>
            <person name="Hunkapiller M.W."/>
            <person name="Myers E.W."/>
            <person name="Venter J.C."/>
        </authorList>
    </citation>
    <scope>NUCLEOTIDE SEQUENCE [LARGE SCALE GENOMIC DNA]</scope>
</reference>
<reference key="12">
    <citation type="journal article" date="2004" name="Genome Res.">
        <title>The status, quality, and expansion of the NIH full-length cDNA project: the Mammalian Gene Collection (MGC).</title>
        <authorList>
            <consortium name="The MGC Project Team"/>
        </authorList>
    </citation>
    <scope>NUCLEOTIDE SEQUENCE [LARGE SCALE MRNA]</scope>
    <scope>VARIANTS HIS-64 AND PRO-98</scope>
    <source>
        <tissue>Skin</tissue>
    </source>
</reference>
<reference key="13">
    <citation type="journal article" date="1993" name="J. Biol. Chem.">
        <title>L-29, a soluble lactose-binding lectin, is phosphorylated on serine 6 and serine 12 in vivo and by casein kinase I.</title>
        <authorList>
            <person name="Huflejt M.E."/>
            <person name="Turck C.W."/>
            <person name="Lindstedt R."/>
            <person name="Barondes S.H."/>
            <person name="Leffler H."/>
        </authorList>
    </citation>
    <scope>PHOSPHORYLATION AT SER-6 AND SER-12</scope>
</reference>
<reference key="14">
    <citation type="journal article" date="1998" name="EMBO J.">
        <title>Mac-2 binding protein is a cell-adhesive protein of the extracellular matrix which self-assembles into ring-like structures and binds beta1 integrins, collagens and fibronectin.</title>
        <authorList>
            <person name="Sasaki T."/>
            <person name="Brakebusch C."/>
            <person name="Engel J."/>
            <person name="Timpl R."/>
        </authorList>
    </citation>
    <scope>INTERACTION WITH LGALS3BP</scope>
</reference>
<reference key="15">
    <citation type="journal article" date="2004" name="Mol. Biol. Cell">
        <title>NG2 proteoglycan promotes endothelial cell motility and angiogenesis via engagement of galectin-3 and alpha3beta1 integrin.</title>
        <authorList>
            <person name="Fukushi J."/>
            <person name="Makagiansar I.T."/>
            <person name="Stallcup W.B."/>
        </authorList>
    </citation>
    <scope>INTERACTION WITH ITGB1; ITGA3 AND CSPG4</scope>
    <scope>SUBCELLULAR LOCATION</scope>
    <scope>FUNCTION</scope>
</reference>
<reference key="16">
    <citation type="journal article" date="2009" name="Immunol. Rev.">
        <title>The regulation of inflammation by galectin-3.</title>
        <authorList>
            <person name="Henderson N.C."/>
            <person name="Sethi T."/>
        </authorList>
    </citation>
    <scope>FUNCTION IN INFLAMMATION</scope>
</reference>
<reference key="17">
    <citation type="journal article" date="2009" name="Proc. Natl. Acad. Sci. U.S.A.">
        <title>A primate subfamily of galectins expressed at the maternal-fetal interface that promote immune cell death.</title>
        <authorList>
            <person name="Than N.G."/>
            <person name="Romero R."/>
            <person name="Goodman M."/>
            <person name="Weckle A."/>
            <person name="Xing J."/>
            <person name="Dong Z."/>
            <person name="Xu Y."/>
            <person name="Tarquini F."/>
            <person name="Szilagyi A."/>
            <person name="Gal P."/>
            <person name="Hou Z."/>
            <person name="Tarca A.L."/>
            <person name="Kim C.J."/>
            <person name="Kim J.S."/>
            <person name="Haidarian S."/>
            <person name="Uddin M."/>
            <person name="Bohn H."/>
            <person name="Benirschke K."/>
            <person name="Santolaya-Forgas J."/>
            <person name="Grossman L.I."/>
            <person name="Erez O."/>
            <person name="Hassan S.S."/>
            <person name="Zavodszky P."/>
            <person name="Papp Z."/>
            <person name="Wildman D.E."/>
        </authorList>
    </citation>
    <scope>TISSUE SPECIFICITY</scope>
</reference>
<reference key="18">
    <citation type="journal article" date="2010" name="Biochim. Biophys. Acta">
        <title>Dynamics of galectin-3 in the nucleus and cytoplasm.</title>
        <authorList>
            <person name="Haudek K.C."/>
            <person name="Spronk K.J."/>
            <person name="Voss P.G."/>
            <person name="Patterson R.J."/>
            <person name="Wang J.L."/>
            <person name="Arnoys E.J."/>
        </authorList>
    </citation>
    <scope>SUBCELLULAR LOCATION</scope>
    <scope>FUNCTION</scope>
</reference>
<reference key="19">
    <citation type="journal article" date="2011" name="BMC Syst. Biol.">
        <title>Initial characterization of the human central proteome.</title>
        <authorList>
            <person name="Burkard T.R."/>
            <person name="Planyavsky M."/>
            <person name="Kaupe I."/>
            <person name="Breitwieser F.P."/>
            <person name="Buerckstuemmer T."/>
            <person name="Bennett K.L."/>
            <person name="Superti-Furga G."/>
            <person name="Colinge J."/>
        </authorList>
    </citation>
    <scope>IDENTIFICATION BY MASS SPECTROMETRY [LARGE SCALE ANALYSIS]</scope>
</reference>
<reference key="20">
    <citation type="journal article" date="2013" name="J. Proteome Res.">
        <title>Toward a comprehensive characterization of a human cancer cell phosphoproteome.</title>
        <authorList>
            <person name="Zhou H."/>
            <person name="Di Palma S."/>
            <person name="Preisinger C."/>
            <person name="Peng M."/>
            <person name="Polat A.N."/>
            <person name="Heck A.J."/>
            <person name="Mohammed S."/>
        </authorList>
    </citation>
    <scope>PHOSPHORYLATION [LARGE SCALE ANALYSIS] AT SER-188</scope>
    <scope>IDENTIFICATION BY MASS SPECTROMETRY [LARGE SCALE ANALYSIS]</scope>
    <source>
        <tissue>Cervix carcinoma</tissue>
    </source>
</reference>
<reference key="21">
    <citation type="journal article" date="2014" name="FEBS Lett.">
        <title>Modulation of CD6 function through interaction with galectin-1 and -3.</title>
        <authorList>
            <person name="Escoda-Ferran C."/>
            <person name="Carrasco E."/>
            <person name="Caballero-Banos M."/>
            <person name="Miro-Julia C."/>
            <person name="Martinez-Florensa M."/>
            <person name="Consuegra-Fernandez M."/>
            <person name="Martinez V.G."/>
            <person name="Liu F.T."/>
            <person name="Lozano F."/>
        </authorList>
    </citation>
    <scope>INTERACTION WITH CD6 AND ALCAM</scope>
</reference>
<reference key="22">
    <citation type="journal article" date="2015" name="Proteomics">
        <title>N-terminome analysis of the human mitochondrial proteome.</title>
        <authorList>
            <person name="Vaca Jacome A.S."/>
            <person name="Rabilloud T."/>
            <person name="Schaeffer-Reiss C."/>
            <person name="Rompais M."/>
            <person name="Ayoub D."/>
            <person name="Lane L."/>
            <person name="Bairoch A."/>
            <person name="Van Dorsselaer A."/>
            <person name="Carapito C."/>
        </authorList>
    </citation>
    <scope>IDENTIFICATION BY MASS SPECTROMETRY [LARGE SCALE ANALYSIS]</scope>
</reference>
<reference key="23">
    <citation type="journal article" date="2016" name="Dev. Cell">
        <title>TRIMs and Galectins Globally Cooperate and TRIM16 and Galectin-3 Co-direct Autophagy in Endomembrane Damage Homeostasis.</title>
        <authorList>
            <person name="Chauhan S."/>
            <person name="Kumar S."/>
            <person name="Jain A."/>
            <person name="Ponpuak M."/>
            <person name="Mudd M.H."/>
            <person name="Kimura T."/>
            <person name="Choi S.W."/>
            <person name="Peters R."/>
            <person name="Mandell M."/>
            <person name="Bruun J.A."/>
            <person name="Johansen T."/>
            <person name="Deretic V."/>
        </authorList>
    </citation>
    <scope>FUNCTION</scope>
    <scope>INTERACTION WITH TRIM16</scope>
</reference>
<reference key="24">
    <citation type="journal article" date="2020" name="Cell">
        <title>A Translocation Pathway for Vesicle-Mediated Unconventional Protein Secretion.</title>
        <authorList>
            <person name="Zhang M."/>
            <person name="Liu L."/>
            <person name="Lin X."/>
            <person name="Wang Y."/>
            <person name="Li Y."/>
            <person name="Guo Q."/>
            <person name="Li S."/>
            <person name="Sun Y."/>
            <person name="Tao X."/>
            <person name="Zhang D."/>
            <person name="Lv X."/>
            <person name="Zheng L."/>
            <person name="Ge L."/>
        </authorList>
    </citation>
    <scope>SUBCELLULAR LOCATION</scope>
    <scope>INTERACTION WITH TMED10</scope>
</reference>
<reference key="25">
    <citation type="journal article" date="1998" name="J. Biol. Chem.">
        <title>X-ray crystal structure of the human galectin-3 carbohydrate recognition domain at 2.1-A resolution.</title>
        <authorList>
            <person name="Seetharaman J."/>
            <person name="Kanigsberg A."/>
            <person name="Slaaby R."/>
            <person name="Leffler H."/>
            <person name="Barondes S.H."/>
            <person name="Rini J.M."/>
        </authorList>
    </citation>
    <scope>X-RAY CRYSTALLOGRAPHY (2.1 ANGSTROMS) OF 114-250</scope>
</reference>
<organism>
    <name type="scientific">Homo sapiens</name>
    <name type="common">Human</name>
    <dbReference type="NCBI Taxonomy" id="9606"/>
    <lineage>
        <taxon>Eukaryota</taxon>
        <taxon>Metazoa</taxon>
        <taxon>Chordata</taxon>
        <taxon>Craniata</taxon>
        <taxon>Vertebrata</taxon>
        <taxon>Euteleostomi</taxon>
        <taxon>Mammalia</taxon>
        <taxon>Eutheria</taxon>
        <taxon>Euarchontoglires</taxon>
        <taxon>Primates</taxon>
        <taxon>Haplorrhini</taxon>
        <taxon>Catarrhini</taxon>
        <taxon>Hominidae</taxon>
        <taxon>Homo</taxon>
    </lineage>
</organism>
<feature type="initiator methionine" description="Removed" evidence="4">
    <location>
        <position position="1"/>
    </location>
</feature>
<feature type="chain" id="PRO_0000076930" description="Galectin-3">
    <location>
        <begin position="2"/>
        <end position="250"/>
    </location>
</feature>
<feature type="repeat" description="1">
    <location>
        <begin position="36"/>
        <end position="44"/>
    </location>
</feature>
<feature type="repeat" description="2">
    <location>
        <begin position="45"/>
        <end position="53"/>
    </location>
</feature>
<feature type="repeat" description="3">
    <location>
        <begin position="54"/>
        <end position="62"/>
    </location>
</feature>
<feature type="repeat" description="4; approximate">
    <location>
        <begin position="63"/>
        <end position="69"/>
    </location>
</feature>
<feature type="repeat" description="5">
    <location>
        <begin position="70"/>
        <end position="78"/>
    </location>
</feature>
<feature type="repeat" description="6; approximate">
    <location>
        <begin position="79"/>
        <end position="88"/>
    </location>
</feature>
<feature type="repeat" description="7; approximate">
    <location>
        <begin position="89"/>
        <end position="100"/>
    </location>
</feature>
<feature type="repeat" description="8; approximate">
    <location>
        <begin position="101"/>
        <end position="109"/>
    </location>
</feature>
<feature type="domain" description="Galectin" evidence="5">
    <location>
        <begin position="118"/>
        <end position="248"/>
    </location>
</feature>
<feature type="region of interest" description="Disordered" evidence="6">
    <location>
        <begin position="1"/>
        <end position="60"/>
    </location>
</feature>
<feature type="region of interest" description="8 X 9 AA tandem repeats of Y-P-G-X(3)-P-G-A">
    <location>
        <begin position="36"/>
        <end position="109"/>
    </location>
</feature>
<feature type="short sequence motif" description="Nuclear export signal" evidence="1">
    <location>
        <begin position="226"/>
        <end position="241"/>
    </location>
</feature>
<feature type="compositionally biased region" description="Low complexity" evidence="6">
    <location>
        <begin position="38"/>
        <end position="47"/>
    </location>
</feature>
<feature type="compositionally biased region" description="Pro residues" evidence="6">
    <location>
        <begin position="48"/>
        <end position="60"/>
    </location>
</feature>
<feature type="binding site" evidence="1">
    <location>
        <begin position="181"/>
        <end position="187"/>
    </location>
    <ligand>
        <name>a beta-D-galactoside</name>
        <dbReference type="ChEBI" id="CHEBI:28034"/>
    </ligand>
</feature>
<feature type="modified residue" description="N-acetylalanine" evidence="4">
    <location>
        <position position="2"/>
    </location>
</feature>
<feature type="modified residue" description="Phosphoserine" evidence="18">
    <location>
        <position position="6"/>
    </location>
</feature>
<feature type="modified residue" description="Phosphoserine" evidence="18">
    <location>
        <position position="12"/>
    </location>
</feature>
<feature type="modified residue" description="Phosphoserine" evidence="22">
    <location>
        <position position="188"/>
    </location>
</feature>
<feature type="disulfide bond" description="Interchain" evidence="1">
    <location>
        <position position="173"/>
    </location>
</feature>
<feature type="sequence variant" id="VAR_012988" description="In dbSNP:rs4644." evidence="8 12 13">
    <original>P</original>
    <variation>H</variation>
    <location>
        <position position="64"/>
    </location>
</feature>
<feature type="sequence variant" id="VAR_012989" description="In dbSNP:rs4652." evidence="8 12 13 14">
    <original>T</original>
    <variation>P</variation>
    <location>
        <position position="98"/>
    </location>
</feature>
<feature type="sequence variant" id="VAR_049768" description="In dbSNP:rs10148371.">
    <original>R</original>
    <variation>K</variation>
    <location>
        <position position="183"/>
    </location>
</feature>
<feature type="sequence conflict" description="In Ref. 2." evidence="20" ref="2">
    <original>AGGYPGASYPGAYPGQAPPG</original>
    <variation>QGLPRGFLSWGLPRAGTPR</variation>
    <location>
        <begin position="33"/>
        <end position="52"/>
    </location>
</feature>
<feature type="sequence conflict" description="In Ref. 2." evidence="20" ref="2">
    <location>
        <position position="88"/>
    </location>
</feature>
<feature type="sequence conflict" description="In Ref. 4; M64303." evidence="20" ref="4">
    <original>S</original>
    <variation>R</variation>
    <location>
        <position position="232"/>
    </location>
</feature>
<feature type="strand" evidence="24">
    <location>
        <begin position="6"/>
        <end position="8"/>
    </location>
</feature>
<feature type="strand" evidence="24">
    <location>
        <begin position="13"/>
        <end position="15"/>
    </location>
</feature>
<feature type="helix" evidence="25">
    <location>
        <begin position="60"/>
        <end position="62"/>
    </location>
</feature>
<feature type="strand" evidence="23">
    <location>
        <begin position="116"/>
        <end position="121"/>
    </location>
</feature>
<feature type="strand" evidence="23">
    <location>
        <begin position="130"/>
        <end position="138"/>
    </location>
</feature>
<feature type="strand" evidence="23">
    <location>
        <begin position="144"/>
        <end position="151"/>
    </location>
</feature>
<feature type="strand" evidence="23">
    <location>
        <begin position="154"/>
        <end position="165"/>
    </location>
</feature>
<feature type="strand" evidence="23">
    <location>
        <begin position="168"/>
        <end position="177"/>
    </location>
</feature>
<feature type="strand" evidence="23">
    <location>
        <begin position="185"/>
        <end position="187"/>
    </location>
</feature>
<feature type="strand" evidence="23">
    <location>
        <begin position="197"/>
        <end position="204"/>
    </location>
</feature>
<feature type="strand" evidence="23">
    <location>
        <begin position="206"/>
        <end position="213"/>
    </location>
</feature>
<feature type="strand" evidence="23">
    <location>
        <begin position="216"/>
        <end position="222"/>
    </location>
</feature>
<feature type="helix" evidence="23">
    <location>
        <begin position="228"/>
        <end position="230"/>
    </location>
</feature>
<feature type="strand" evidence="23">
    <location>
        <begin position="233"/>
        <end position="249"/>
    </location>
</feature>
<protein>
    <recommendedName>
        <fullName>Galectin-3</fullName>
        <shortName>Gal-3</shortName>
    </recommendedName>
    <alternativeName>
        <fullName>35 kDa lectin</fullName>
    </alternativeName>
    <alternativeName>
        <fullName>Carbohydrate-binding protein 35</fullName>
        <shortName>CBP 35</shortName>
    </alternativeName>
    <alternativeName>
        <fullName>Galactose-specific lectin 3</fullName>
    </alternativeName>
    <alternativeName>
        <fullName>Galactoside-binding protein</fullName>
        <shortName>GALBP</shortName>
    </alternativeName>
    <alternativeName>
        <fullName>IgE-binding protein</fullName>
    </alternativeName>
    <alternativeName>
        <fullName>L-31</fullName>
    </alternativeName>
    <alternativeName>
        <fullName>Laminin-binding protein</fullName>
    </alternativeName>
    <alternativeName>
        <fullName>Lectin L-29</fullName>
    </alternativeName>
    <alternativeName>
        <fullName>Mac-2 antigen</fullName>
    </alternativeName>
</protein>
<comment type="function">
    <text evidence="1 7 10 11 16">Galactose-specific lectin which binds IgE. May mediate with the alpha-3, beta-1 integrin the stimulation by CSPG4 of endothelial cells migration. Together with DMBT1, required for terminal differentiation of columnar epithelial cells during early embryogenesis (By similarity). In the nucleus: acts as a pre-mRNA splicing factor. Involved in acute inflammatory responses including neutrophil activation and adhesion, chemoattraction of monocytes macrophages, opsonization of apoptotic neutrophils, and activation of mast cells. Together with TRIM16, coordinates the recognition of membrane damage with mobilization of the core autophagy regulators ATG16L1 and BECN1 in response to damaged endomembranes.</text>
</comment>
<comment type="subunit">
    <text evidence="2 3 7 15 16 17 19">Probably forms homo- or heterodimers. Interacts with DMBT1 (By similarity). Interacts with CD6 and ALCAM (PubMed:24945728). Forms a complex with the ITGA3, ITGB1 and CSPG4. Interacts with LGALS3BP, LYPD3, ZFTRAF1 and UACA. Interacts with TRIM16; this interaction mediates autophagy of damage endomembranes. Interacts with cargo receptor TMED10; the interaction mediates the translocation from the cytoplasm into the ERGIC (endoplasmic reticulum-Golgi intermediate compartment) and thereby secretion (PubMed:32272059).</text>
</comment>
<comment type="interaction">
    <interactant intactId="EBI-1170392">
        <id>P17931</id>
    </interactant>
    <interactant intactId="EBI-1188108">
        <id>Q13740</id>
        <label>ALCAM</label>
    </interactant>
    <organismsDiffer>false</organismsDiffer>
    <experiments>6</experiments>
</comment>
<comment type="interaction">
    <interactant intactId="EBI-1170392">
        <id>P17931</id>
    </interactant>
    <interactant intactId="EBI-2873748">
        <id>P30203</id>
        <label>CD6</label>
    </interactant>
    <organismsDiffer>false</organismsDiffer>
    <experiments>2</experiments>
</comment>
<comment type="interaction">
    <interactant intactId="EBI-1170392">
        <id>P17931</id>
    </interactant>
    <interactant intactId="EBI-6917454">
        <id>P36222</id>
        <label>CHI3L1</label>
    </interactant>
    <organismsDiffer>false</organismsDiffer>
    <experiments>2</experiments>
</comment>
<comment type="interaction">
    <interactant intactId="EBI-1170392">
        <id>P17931</id>
    </interactant>
    <interactant intactId="EBI-748171">
        <id>O43186</id>
        <label>CRX</label>
    </interactant>
    <organismsDiffer>false</organismsDiffer>
    <experiments>3</experiments>
</comment>
<comment type="interaction">
    <interactant intactId="EBI-1170392">
        <id>P17931</id>
    </interactant>
    <interactant intactId="EBI-2834630">
        <id>P17813</id>
        <label>ENG</label>
    </interactant>
    <organismsDiffer>false</organismsDiffer>
    <experiments>5</experiments>
</comment>
<comment type="interaction">
    <interactant intactId="EBI-1170392">
        <id>P17931</id>
    </interactant>
    <interactant intactId="EBI-618309">
        <id>Q08379</id>
        <label>GOLGA2</label>
    </interactant>
    <organismsDiffer>false</organismsDiffer>
    <experiments>3</experiments>
</comment>
<comment type="interaction">
    <interactant intactId="EBI-1170392">
        <id>P17931</id>
    </interactant>
    <interactant intactId="EBI-4320063">
        <id>Q14627</id>
        <label>IL13RA2</label>
    </interactant>
    <organismsDiffer>false</organismsDiffer>
    <experiments>2</experiments>
</comment>
<comment type="interaction">
    <interactant intactId="EBI-1170392">
        <id>P17931</id>
    </interactant>
    <interactant intactId="EBI-6509505">
        <id>Q0VD86</id>
        <label>INCA1</label>
    </interactant>
    <organismsDiffer>false</organismsDiffer>
    <experiments>3</experiments>
</comment>
<comment type="interaction">
    <interactant intactId="EBI-1170392">
        <id>P17931</id>
    </interactant>
    <interactant intactId="EBI-10988217">
        <id>Q96L93-6</id>
        <label>KIF16B</label>
    </interactant>
    <organismsDiffer>false</organismsDiffer>
    <experiments>3</experiments>
</comment>
<comment type="interaction">
    <interactant intactId="EBI-1170392">
        <id>P17931</id>
    </interactant>
    <interactant intactId="EBI-765995">
        <id>Q9HBW0</id>
        <label>LPAR2</label>
    </interactant>
    <organismsDiffer>false</organismsDiffer>
    <experiments>3</experiments>
</comment>
<comment type="interaction">
    <interactant intactId="EBI-1170392">
        <id>P17931</id>
    </interactant>
    <interactant intactId="EBI-1031130">
        <id>Q29983</id>
        <label>MICA</label>
    </interactant>
    <organismsDiffer>false</organismsDiffer>
    <experiments>2</experiments>
</comment>
<comment type="interaction">
    <interactant intactId="EBI-1170392">
        <id>P17931</id>
    </interactant>
    <interactant intactId="EBI-6595344">
        <id>P09237</id>
        <label>MMP7</label>
    </interactant>
    <organismsDiffer>false</organismsDiffer>
    <experiments>5</experiments>
</comment>
<comment type="interaction">
    <interactant intactId="EBI-1170392">
        <id>P17931</id>
    </interactant>
    <interactant intactId="EBI-14989262">
        <id>O14931</id>
        <label>NCR3</label>
    </interactant>
    <organismsDiffer>false</organismsDiffer>
    <experiments>2</experiments>
</comment>
<comment type="interaction">
    <interactant intactId="EBI-1170392">
        <id>P17931</id>
    </interactant>
    <interactant intactId="EBI-15098724">
        <id>O14931-2</id>
        <label>NCR3</label>
    </interactant>
    <organismsDiffer>false</organismsDiffer>
    <experiments>3</experiments>
</comment>
<comment type="interaction">
    <interactant intactId="EBI-1170392">
        <id>P17931</id>
    </interactant>
    <interactant intactId="EBI-310624">
        <id>Q8WUM4</id>
        <label>PDCD6IP</label>
    </interactant>
    <organismsDiffer>false</organismsDiffer>
    <experiments>2</experiments>
</comment>
<comment type="interaction">
    <interactant intactId="EBI-1170392">
        <id>P17931</id>
    </interactant>
    <interactant intactId="EBI-396072">
        <id>Q13427</id>
        <label>PPIG</label>
    </interactant>
    <organismsDiffer>false</organismsDiffer>
    <experiments>3</experiments>
</comment>
<comment type="interaction">
    <interactant intactId="EBI-1170392">
        <id>P17931</id>
    </interactant>
    <interactant intactId="EBI-740924">
        <id>Q9NZ81</id>
        <label>PRR13</label>
    </interactant>
    <organismsDiffer>false</organismsDiffer>
    <experiments>4</experiments>
</comment>
<comment type="interaction">
    <interactant intactId="EBI-1170392">
        <id>P17931</id>
    </interactant>
    <interactant intactId="EBI-744674">
        <id>O75177</id>
        <label>SS18L1</label>
    </interactant>
    <organismsDiffer>false</organismsDiffer>
    <experiments>3</experiments>
</comment>
<comment type="interaction">
    <interactant intactId="EBI-1170392">
        <id>P17931</id>
    </interactant>
    <interactant intactId="EBI-10255122">
        <id>Q6ZP80</id>
        <label>TMEM182</label>
    </interactant>
    <organismsDiffer>false</organismsDiffer>
    <experiments>2</experiments>
</comment>
<comment type="interaction">
    <interactant intactId="EBI-1170392">
        <id>P17931</id>
    </interactant>
    <interactant intactId="EBI-9396660">
        <id>P12763</id>
        <label>AHSG</label>
    </interactant>
    <organismsDiffer>true</organismsDiffer>
    <experiments>2</experiments>
</comment>
<comment type="interaction">
    <interactant intactId="EBI-1170392">
        <id>P17931</id>
    </interactant>
    <interactant intactId="EBI-15788421">
        <id>Q9WU78-1</id>
        <label>Pdcd6ip</label>
    </interactant>
    <organismsDiffer>true</organismsDiffer>
    <experiments>2</experiments>
</comment>
<comment type="interaction">
    <interactant intactId="EBI-1170392">
        <id>P17931</id>
    </interactant>
    <interactant intactId="EBI-25474821">
        <id>P0DTC2</id>
        <label>S</label>
    </interactant>
    <organismsDiffer>true</organismsDiffer>
    <experiments>2</experiments>
</comment>
<comment type="subcellular location">
    <subcellularLocation>
        <location evidence="17">Cytoplasm</location>
    </subcellularLocation>
    <subcellularLocation>
        <location>Nucleus</location>
    </subcellularLocation>
    <subcellularLocation>
        <location evidence="17">Secreted</location>
    </subcellularLocation>
    <text evidence="17">Secreted by a non-classical secretory pathway and associates with the cell surface. Can be secreted; the secretion is dependent on protein unfolding and facilitated by the cargo receptor TMED10; it results in protein translocation from the cytoplasm into the ERGIC (endoplasmic reticulum-Golgi intermediate compartment) followed by vesicle entry and secretion (PubMed:32272059).</text>
</comment>
<comment type="tissue specificity">
    <text evidence="9">A major expression is found in the colonic epithelium. It is also abundant in the activated macrophages. Expressed in fetal membranes.</text>
</comment>
<comment type="online information" name="Functional Glycomics Gateway - Glycan Binding">
    <link uri="http://www.functionalglycomics.org/glycomics/GBPServlet?&amp;operationType=view&amp;cbpId=cbp_hum_Stlect_00118"/>
    <text>Galectin-3</text>
</comment>
<comment type="online information" name="Atlas of Genetics and Cytogenetics in Oncology and Haematology">
    <link uri="https://atlasgeneticsoncology.org/gene/44396/LGALS3"/>
</comment>
<accession>P17931</accession>
<accession>B2RC38</accession>
<accession>Q16005</accession>
<accession>Q6IBA7</accession>
<accession>Q96J47</accession>
<proteinExistence type="evidence at protein level"/>